<organism>
    <name type="scientific">Bos taurus</name>
    <name type="common">Bovine</name>
    <dbReference type="NCBI Taxonomy" id="9913"/>
    <lineage>
        <taxon>Eukaryota</taxon>
        <taxon>Metazoa</taxon>
        <taxon>Chordata</taxon>
        <taxon>Craniata</taxon>
        <taxon>Vertebrata</taxon>
        <taxon>Euteleostomi</taxon>
        <taxon>Mammalia</taxon>
        <taxon>Eutheria</taxon>
        <taxon>Laurasiatheria</taxon>
        <taxon>Artiodactyla</taxon>
        <taxon>Ruminantia</taxon>
        <taxon>Pecora</taxon>
        <taxon>Bovidae</taxon>
        <taxon>Bovinae</taxon>
        <taxon>Bos</taxon>
    </lineage>
</organism>
<evidence type="ECO:0000250" key="1"/>
<evidence type="ECO:0000269" key="2">
    <source>
    </source>
</evidence>
<evidence type="ECO:0000269" key="3">
    <source>
    </source>
</evidence>
<evidence type="ECO:0000269" key="4">
    <source>
    </source>
</evidence>
<evidence type="ECO:0000269" key="5">
    <source>
    </source>
</evidence>
<evidence type="ECO:0000269" key="6">
    <source>
    </source>
</evidence>
<evidence type="ECO:0000269" key="7">
    <source>
    </source>
</evidence>
<evidence type="ECO:0000305" key="8"/>
<evidence type="ECO:0007829" key="9">
    <source>
        <dbReference type="PDB" id="1DY5"/>
    </source>
</evidence>
<evidence type="ECO:0007829" key="10">
    <source>
        <dbReference type="PDB" id="1YMN"/>
    </source>
</evidence>
<evidence type="ECO:0007829" key="11">
    <source>
        <dbReference type="PDB" id="3DH6"/>
    </source>
</evidence>
<evidence type="ECO:0007829" key="12">
    <source>
        <dbReference type="PDB" id="3FL0"/>
    </source>
</evidence>
<evidence type="ECO:0007829" key="13">
    <source>
        <dbReference type="PDB" id="6ETK"/>
    </source>
</evidence>
<accession>P61823</accession>
<accession>A6QPW8</accession>
<accession>P00656</accession>
<accession>Q9TSF2</accession>
<comment type="function">
    <text evidence="7">Endonuclease that catalyzes the cleavage of RNA on the 3' side of pyrimidine nucleotides. Acts on single-stranded and double-stranded RNA.</text>
</comment>
<comment type="catalytic activity">
    <reaction>
        <text>an [RNA] containing cytidine + H2O = an [RNA]-3'-cytidine-3'-phosphate + a 5'-hydroxy-ribonucleotide-3'-[RNA].</text>
        <dbReference type="EC" id="4.6.1.18"/>
    </reaction>
</comment>
<comment type="catalytic activity">
    <reaction>
        <text>an [RNA] containing uridine + H2O = an [RNA]-3'-uridine-3'-phosphate + a 5'-hydroxy-ribonucleotide-3'-[RNA].</text>
        <dbReference type="EC" id="4.6.1.18"/>
    </reaction>
</comment>
<comment type="subunit">
    <text evidence="1 2">Interacts with and forms tight 1:1 complexes with RNH1. Dimerization of two such complexes may occur. Interaction with RNH1 inhibits this protein (By similarity). Monomer.</text>
</comment>
<comment type="interaction">
    <interactant intactId="EBI-908364">
        <id>P61823</id>
    </interactant>
    <interactant intactId="EBI-2314714">
        <id>Q80UW2</id>
        <label>Fbxo2</label>
    </interactant>
    <organismsDiffer>true</organismsDiffer>
    <experiments>2</experiments>
</comment>
<comment type="interaction">
    <interactant intactId="EBI-908364">
        <id>P61823</id>
    </interactant>
    <interactant intactId="EBI-13012">
        <id>P17967</id>
        <label>PDI1</label>
    </interactant>
    <organismsDiffer>true</organismsDiffer>
    <experiments>2</experiments>
</comment>
<comment type="interaction">
    <interactant intactId="EBI-908364">
        <id>P61823</id>
    </interactant>
    <interactant intactId="EBI-1237106">
        <id>P13489</id>
        <label>RNH1</label>
    </interactant>
    <organismsDiffer>true</organismsDiffer>
    <experiments>3</experiments>
</comment>
<comment type="subcellular location">
    <subcellularLocation>
        <location>Secreted</location>
    </subcellularLocation>
</comment>
<comment type="tissue specificity">
    <text>Pancreas.</text>
</comment>
<comment type="similarity">
    <text evidence="8">Belongs to the pancreatic ribonuclease family.</text>
</comment>
<comment type="online information" name="Functional Glycomics Gateway - Glycan Binding">
    <link uri="http://www.functionalglycomics.org/glycomics/GBPServlet?&amp;operationType=view&amp;cbpId=cbp_oth_other_805"/>
    <text>RNase A</text>
</comment>
<gene>
    <name type="primary">RNASE1</name>
    <name type="synonym">RNS1</name>
</gene>
<proteinExistence type="evidence at protein level"/>
<reference key="1">
    <citation type="journal article" date="1988" name="Nucleic Acids Res.">
        <title>Structure of the bovine pancreatic ribonuclease gene: the unique intervening sequence in the 5' untranslated region contains a promoter-like element.</title>
        <authorList>
            <person name="Carsana A."/>
            <person name="Confalone E."/>
            <person name="Palmieri M."/>
            <person name="Libonati M."/>
            <person name="Furia A."/>
        </authorList>
    </citation>
    <scope>NUCLEOTIDE SEQUENCE [GENOMIC DNA]</scope>
</reference>
<reference key="2">
    <citation type="submission" date="2007-07" db="EMBL/GenBank/DDBJ databases">
        <authorList>
            <consortium name="NIH - Mammalian Gene Collection (MGC) project"/>
        </authorList>
    </citation>
    <scope>NUCLEOTIDE SEQUENCE [LARGE SCALE MRNA]</scope>
    <source>
        <strain>Hereford</strain>
        <tissue>Fetal pancreas</tissue>
    </source>
</reference>
<reference key="3">
    <citation type="journal article" date="1995" name="Protein Eng.">
        <title>Engineering ribonuclease A: production, purification and characterization of wild-type enzyme and mutants at Gln11.</title>
        <authorList>
            <person name="Delcardayre S.B."/>
            <person name="Ribo M."/>
            <person name="Yokel E.M."/>
            <person name="Quirk D.J."/>
            <person name="Rutter W.J."/>
            <person name="Raines R.T."/>
        </authorList>
    </citation>
    <scope>NUCLEOTIDE SEQUENCE [MRNA] OF 23-150</scope>
    <scope>FUNCTION</scope>
</reference>
<reference key="4">
    <citation type="journal article" date="1963" name="J. Biol. Chem.">
        <title>The sequence of amino acid residues in bovine pancreatic ribonuclease: revisions and confirmations.</title>
        <authorList>
            <person name="Smyth D.G."/>
            <person name="Stein W.H."/>
            <person name="Moore S."/>
        </authorList>
    </citation>
    <scope>PROTEIN SEQUENCE OF 27-150</scope>
    <scope>DISULFIDE BONDS</scope>
    <source>
        <tissue>Pancreas</tissue>
    </source>
</reference>
<reference key="5">
    <citation type="journal article" date="1964" name="J. Biol. Chem.">
        <title>On the structure of bovine pancreatic ribonuclease B. Isolation of a glycopeptide.</title>
        <authorList>
            <person name="Plummer T.H. Jr."/>
            <person name="Hirs C.H.W."/>
        </authorList>
    </citation>
    <scope>PROTEIN SEQUENCE OF 27-150</scope>
    <source>
        <tissue>Pancreas</tissue>
    </source>
</reference>
<reference key="6">
    <citation type="journal article" date="1995" name="J. Mol. Evol.">
        <title>Molecular evolution of genes encoding ribonucleases in ruminant species.</title>
        <authorList>
            <person name="Confalone E."/>
            <person name="Beintema J.J."/>
            <person name="Sasso M.P."/>
            <person name="Carsana A."/>
            <person name="Palmieri M."/>
            <person name="Vento M.T."/>
            <person name="Furia A."/>
        </authorList>
    </citation>
    <scope>NUCLEOTIDE SEQUENCE [GENOMIC DNA] OF 27-150</scope>
</reference>
<reference key="7">
    <citation type="journal article" date="1965" name="J. Biol. Chem.">
        <title>The reactivities of the histidine residues at the active site of ribonuclease toward halo acids of different structures.</title>
        <authorList>
            <person name="Heinrikson R.L."/>
            <person name="Stein W.H."/>
            <person name="Crestfield A.M."/>
            <person name="Moore S."/>
        </authorList>
    </citation>
    <scope>ACTIVE SITE</scope>
</reference>
<reference key="8">
    <citation type="journal article" date="1969" name="J. Mol. Biol.">
        <title>Heavy atom-labelled derivatives of bovine pancreatic ribonuclease. I. Specific reactions of ribonuclease with N-acetylhomocysteine thiolactone and silver ion.</title>
        <authorList>
            <person name="Shall S."/>
            <person name="Barnard E.A."/>
        </authorList>
    </citation>
    <scope>ACTIVE SITE</scope>
</reference>
<reference key="9">
    <citation type="journal article" date="1985" name="J. Biol. Chem.">
        <title>Glycation of amino groups in protein. Studies on the specificity of modification of RNase by glucose.</title>
        <authorList>
            <person name="Watkins N.G."/>
            <person name="Thorpe S.R."/>
            <person name="Baynes J.W."/>
        </authorList>
    </citation>
    <scope>GLYCATION AT LYS-27; LYS-33; LYS-63 AND LYS-67</scope>
</reference>
<reference key="10">
    <citation type="journal article" date="1986" name="Science">
        <title>The mechanism of binding of a polynucleotide chain to pancreatic ribonuclease.</title>
        <authorList>
            <person name="McPherson A."/>
            <person name="Brayer G."/>
            <person name="Cascio D."/>
            <person name="Williams R."/>
        </authorList>
    </citation>
    <scope>DNA-BINDING</scope>
</reference>
<reference key="11">
    <citation type="journal article" date="2009" name="Anal. Chem.">
        <title>Site-specific glycoprofiling of N-linked glycopeptides using MALDI-TOF MS: strong correlation between signal strength and glycoform quantities.</title>
        <authorList>
            <person name="Thaysen-Andersen M."/>
            <person name="Mysling S."/>
            <person name="Hojrup P."/>
        </authorList>
    </citation>
    <scope>GLYCOSYLATION AT ASN-60</scope>
</reference>
<reference key="12">
    <citation type="journal article" date="1970" name="J. Biol. Chem.">
        <title>The three-dimensional structure of ribonuclease-S. Interpretation of an electron density map at a nominal resolution of 2 A.</title>
        <authorList>
            <person name="Wyckoff H.W."/>
            <person name="Tsernoglou D."/>
            <person name="Hanson A.W."/>
            <person name="Knox J.R."/>
            <person name="Lee B."/>
            <person name="Richards F.M."/>
        </authorList>
    </citation>
    <scope>X-RAY CRYSTALLOGRAPHY (2.0 ANGSTROMS)</scope>
</reference>
<reference key="13">
    <citation type="journal article" date="1974" name="J. Mol. Biol.">
        <title>The structure of ribonuclease at 2.5-A resolution.</title>
        <authorList>
            <person name="Carlisle C.H."/>
            <person name="Palmer R.A."/>
            <person name="Mazumdar S.K."/>
            <person name="Gorinsky B.A."/>
            <person name="Yeates D.G.R."/>
        </authorList>
    </citation>
    <scope>X-RAY CRYSTALLOGRAPHY (2.5 ANGSTROMS)</scope>
</reference>
<reference key="14">
    <citation type="journal article" date="1982" name="J. Biol. Chem.">
        <title>The refined crystal structure of ribonuclease A at 2.0-A resolution.</title>
        <authorList>
            <person name="Wlodawer A."/>
            <person name="Bott R."/>
            <person name="Sjoelin L."/>
        </authorList>
    </citation>
    <scope>X-RAY CRYSTALLOGRAPHY (2.0 ANGSTROMS)</scope>
</reference>
<reference key="15">
    <citation type="journal article" date="1988" name="Biochemistry">
        <title>Structure of phosphate-free ribonuclease A refined at 1.26 A.</title>
        <authorList>
            <person name="Wlodawer A."/>
            <person name="Svensson L.A."/>
            <person name="Sjoelin L."/>
            <person name="Gilliland G.L."/>
        </authorList>
    </citation>
    <scope>X-RAY CRYSTALLOGRAPHY (1.26 ANGSTROMS)</scope>
</reference>
<reference key="16">
    <citation type="journal article" date="1997" name="Biochemistry">
        <title>Crystal structures of ribonuclease A complexes with 5'-diphosphoadenosine 3'-phosphate and 5'-diphosphoadenosine 2'-phosphate at 1.7-A resolution.</title>
        <authorList>
            <person name="Leonidas D.D."/>
            <person name="Shapiro R."/>
            <person name="Irons L.I."/>
            <person name="Russo N."/>
            <person name="Acharya K.R."/>
        </authorList>
    </citation>
    <scope>X-RAY CRYSTALLOGRAPHY (1.7 ANGSTROMS)</scope>
</reference>
<reference key="17">
    <citation type="journal article" date="2000" name="Biochemistry">
        <title>Excavating an active site: the nucleobase specificity of ribonuclease A.</title>
        <authorList>
            <person name="Kelemen B.R."/>
            <person name="Schultz L.W."/>
            <person name="Sweeney R.Y."/>
            <person name="Raines R.T."/>
        </authorList>
    </citation>
    <scope>X-RAY CRYSTALLOGRAPHY (1.8 ANGSTROMS) OF 2-125 OF MUTANT GLY-67</scope>
</reference>
<reference key="18">
    <citation type="journal article" date="2001" name="Biochemistry">
        <title>Contribution of the active site histidine residues of ribonuclease A to nucleic acid binding.</title>
        <authorList>
            <person name="Park C."/>
            <person name="Schultz L.W."/>
            <person name="Raines R.T."/>
        </authorList>
    </citation>
    <scope>X-RAY CRYSTALLOGRAPHY (1.7 ANGSTROMS) OF MUTANTS ALA-38 AND ALA-145</scope>
</reference>
<reference key="19">
    <citation type="journal article" date="2001" name="Biochemistry">
        <title>Cleavage of 3',5'-pyrophosphate-linked dinucleotides by ribonuclease A and angiogenin.</title>
        <authorList>
            <person name="Jardine A.M."/>
            <person name="Leonidas D.D."/>
            <person name="Jenkins J.L."/>
            <person name="Park C."/>
            <person name="Raines R.T."/>
            <person name="Acharya K.R."/>
            <person name="Shapiro R."/>
        </authorList>
    </citation>
    <scope>X-RAY CRYSTALLOGRAPHY (1.8 ANGSTROMS) IN COMPLEX WITH SUBSTRATE ANALOG</scope>
</reference>
<reference key="20">
    <citation type="journal article" date="2002" name="Protein Sci.">
        <title>Conformational strictness required for maximum activity and stability of bovine pancreatic ribonuclease A as revealed by crystallographic study of three Phe120 mutants at 1.4 A resolution.</title>
        <authorList>
            <person name="Chatani E."/>
            <person name="Hayashi R."/>
            <person name="Moriyama H."/>
            <person name="Ueki T."/>
        </authorList>
    </citation>
    <scope>X-RAY CRYSTALLOGRAPHY (1.4 ANGSTROMS) OF MUTANTS ALA-120; PHE-120 AND TRP-120</scope>
</reference>
<reference key="21">
    <citation type="journal article" date="1989" name="Biochemistry">
        <title>Proton NMR assignments and regular backbone structure of bovine pancreatic ribonuclease A in aqueous solution.</title>
        <authorList>
            <person name="Robertson A.D."/>
            <person name="Purisima E.O."/>
            <person name="Eastman M.A."/>
            <person name="Scheraga H.A."/>
        </authorList>
    </citation>
    <scope>STRUCTURE BY NMR</scope>
</reference>
<reference key="22">
    <citation type="journal article" date="1989" name="Eur. J. Biochem.">
        <title>Sequential 1H-NMR assignment and solution structure of bovine pancreatic ribonuclease A.</title>
        <authorList>
            <person name="Rico M."/>
            <person name="Bruix M."/>
            <person name="Santoro J."/>
            <person name="Gonzalez C."/>
            <person name="Neira J.L."/>
            <person name="Nieto J.L."/>
            <person name="Herranz J."/>
        </authorList>
    </citation>
    <scope>STRUCTURE BY NMR</scope>
</reference>
<reference key="23">
    <citation type="journal article" date="1991" name="J. Biomol. NMR">
        <title>3D structure of bovine pancreatic ribonuclease A in aqueous solution: an approach to tertiary structure determination from a small basis of 1H NMR NOE correlations.</title>
        <authorList>
            <person name="Rico M."/>
            <person name="Santoro J."/>
            <person name="Gonzalez C."/>
            <person name="Bruix M."/>
            <person name="Neira J.L."/>
            <person name="Nieto J.L."/>
            <person name="Herranz J."/>
        </authorList>
    </citation>
    <scope>STRUCTURE BY NMR</scope>
</reference>
<feature type="signal peptide" evidence="3 4">
    <location>
        <begin position="1"/>
        <end position="26"/>
    </location>
</feature>
<feature type="chain" id="PRO_0000030915" description="Ribonuclease pancreatic">
    <location>
        <begin position="27"/>
        <end position="150"/>
    </location>
</feature>
<feature type="active site" description="Proton acceptor">
    <location>
        <position position="38"/>
    </location>
</feature>
<feature type="active site" description="Proton donor">
    <location>
        <position position="145"/>
    </location>
</feature>
<feature type="binding site">
    <location>
        <position position="33"/>
    </location>
    <ligand>
        <name>substrate</name>
    </ligand>
</feature>
<feature type="binding site">
    <location>
        <position position="36"/>
    </location>
    <ligand>
        <name>substrate</name>
    </ligand>
</feature>
<feature type="binding site">
    <location>
        <begin position="67"/>
        <end position="71"/>
    </location>
    <ligand>
        <name>substrate</name>
    </ligand>
</feature>
<feature type="binding site">
    <location>
        <position position="92"/>
    </location>
    <ligand>
        <name>substrate</name>
    </ligand>
</feature>
<feature type="binding site">
    <location>
        <position position="111"/>
    </location>
    <ligand>
        <name>substrate</name>
    </ligand>
</feature>
<feature type="glycosylation site" description="N-linked (Glc) (glycation) lysine; in vitro" evidence="6">
    <location>
        <position position="27"/>
    </location>
</feature>
<feature type="glycosylation site" description="N-linked (Glc) (glycation) lysine; in vitro" evidence="6">
    <location>
        <position position="33"/>
    </location>
</feature>
<feature type="glycosylation site" id="CAR_000006" description="N-linked (GlcNAc...) asparagine; partial" evidence="5">
    <location>
        <position position="60"/>
    </location>
</feature>
<feature type="glycosylation site" description="N-linked (Glc) (glycation) lysine; in vitro" evidence="6">
    <location>
        <position position="63"/>
    </location>
</feature>
<feature type="glycosylation site" description="N-linked (Glc) (glycation) lysine; in vitro" evidence="6">
    <location>
        <position position="67"/>
    </location>
</feature>
<feature type="disulfide bond" evidence="3">
    <location>
        <begin position="52"/>
        <end position="110"/>
    </location>
</feature>
<feature type="disulfide bond" evidence="3">
    <location>
        <begin position="66"/>
        <end position="121"/>
    </location>
</feature>
<feature type="disulfide bond" evidence="3">
    <location>
        <begin position="84"/>
        <end position="136"/>
    </location>
</feature>
<feature type="disulfide bond" evidence="3">
    <location>
        <begin position="91"/>
        <end position="98"/>
    </location>
</feature>
<feature type="mutagenesis site" description="Loss of activity.">
    <original>H</original>
    <variation>A</variation>
    <location>
        <position position="38"/>
    </location>
</feature>
<feature type="mutagenesis site" description="Loss of activity.">
    <original>H</original>
    <variation>A</variation>
    <location>
        <position position="145"/>
    </location>
</feature>
<feature type="helix" evidence="13">
    <location>
        <begin position="30"/>
        <end position="38"/>
    </location>
</feature>
<feature type="strand" evidence="9">
    <location>
        <begin position="43"/>
        <end position="45"/>
    </location>
</feature>
<feature type="helix" evidence="12">
    <location>
        <begin position="48"/>
        <end position="50"/>
    </location>
</feature>
<feature type="helix" evidence="13">
    <location>
        <begin position="51"/>
        <end position="58"/>
    </location>
</feature>
<feature type="turn" evidence="13">
    <location>
        <begin position="59"/>
        <end position="62"/>
    </location>
</feature>
<feature type="strand" evidence="13">
    <location>
        <begin position="63"/>
        <end position="65"/>
    </location>
</feature>
<feature type="strand" evidence="13">
    <location>
        <begin position="68"/>
        <end position="73"/>
    </location>
</feature>
<feature type="helix" evidence="13">
    <location>
        <begin position="77"/>
        <end position="81"/>
    </location>
</feature>
<feature type="helix" evidence="13">
    <location>
        <begin position="82"/>
        <end position="85"/>
    </location>
</feature>
<feature type="strand" evidence="13">
    <location>
        <begin position="86"/>
        <end position="89"/>
    </location>
</feature>
<feature type="strand" evidence="11">
    <location>
        <begin position="92"/>
        <end position="94"/>
    </location>
</feature>
<feature type="strand" evidence="13">
    <location>
        <begin position="98"/>
        <end position="100"/>
    </location>
</feature>
<feature type="strand" evidence="13">
    <location>
        <begin position="105"/>
        <end position="112"/>
    </location>
</feature>
<feature type="strand" evidence="10">
    <location>
        <begin position="118"/>
        <end position="120"/>
    </location>
</feature>
<feature type="strand" evidence="13">
    <location>
        <begin position="123"/>
        <end position="130"/>
    </location>
</feature>
<feature type="strand" evidence="13">
    <location>
        <begin position="132"/>
        <end position="137"/>
    </location>
</feature>
<feature type="turn" evidence="13">
    <location>
        <begin position="138"/>
        <end position="141"/>
    </location>
</feature>
<feature type="strand" evidence="13">
    <location>
        <begin position="142"/>
        <end position="149"/>
    </location>
</feature>
<sequence>MALKSLVLLSLLVLVLLLVRVQPSLGKETAAAKFERQHMDSSTSAASSSNYCNQMMKSRNLTKDRCKPVNTFVHESLADVQAVCSQKNVACKNGQTNCYQSYSTMSITDCRETGSSKYPNCAYKTTQANKHIIVACEGNPYVPVHFDASV</sequence>
<keyword id="KW-0002">3D-structure</keyword>
<keyword id="KW-0903">Direct protein sequencing</keyword>
<keyword id="KW-1015">Disulfide bond</keyword>
<keyword id="KW-0255">Endonuclease</keyword>
<keyword id="KW-0971">Glycation</keyword>
<keyword id="KW-0325">Glycoprotein</keyword>
<keyword id="KW-0378">Hydrolase</keyword>
<keyword id="KW-0456">Lyase</keyword>
<keyword id="KW-0540">Nuclease</keyword>
<keyword id="KW-1185">Reference proteome</keyword>
<keyword id="KW-0964">Secreted</keyword>
<keyword id="KW-0732">Signal</keyword>
<protein>
    <recommendedName>
        <fullName>Ribonuclease pancreatic</fullName>
        <ecNumber>4.6.1.18</ecNumber>
    </recommendedName>
    <alternativeName>
        <fullName>RNase 1</fullName>
    </alternativeName>
    <alternativeName>
        <fullName>RNase A</fullName>
    </alternativeName>
</protein>
<name>RNAS1_BOVIN</name>
<dbReference type="EC" id="4.6.1.18"/>
<dbReference type="EMBL" id="X07283">
    <property type="protein sequence ID" value="CAA30263.1"/>
    <property type="molecule type" value="Genomic_DNA"/>
</dbReference>
<dbReference type="EMBL" id="BC149529">
    <property type="protein sequence ID" value="AAI49530.1"/>
    <property type="molecule type" value="mRNA"/>
</dbReference>
<dbReference type="EMBL" id="BC149636">
    <property type="protein sequence ID" value="AAI49637.1"/>
    <property type="molecule type" value="mRNA"/>
</dbReference>
<dbReference type="EMBL" id="S80747">
    <property type="protein sequence ID" value="AAB35594.1"/>
    <property type="molecule type" value="mRNA"/>
</dbReference>
<dbReference type="EMBL" id="S81740">
    <property type="protein sequence ID" value="AAB36134.1"/>
    <property type="molecule type" value="Genomic_DNA"/>
</dbReference>
<dbReference type="PIR" id="S00897">
    <property type="entry name" value="NRBO"/>
</dbReference>
<dbReference type="RefSeq" id="NP_001014408.2">
    <property type="nucleotide sequence ID" value="NM_001014386.4"/>
</dbReference>
<dbReference type="RefSeq" id="XP_005211519.1">
    <property type="nucleotide sequence ID" value="XM_005211462.2"/>
</dbReference>
<dbReference type="PDB" id="1A2W">
    <property type="method" value="X-ray"/>
    <property type="resolution" value="2.10 A"/>
    <property type="chains" value="A/B=27-150"/>
</dbReference>
<dbReference type="PDB" id="1A5P">
    <property type="method" value="X-ray"/>
    <property type="resolution" value="1.60 A"/>
    <property type="chains" value="A=27-150"/>
</dbReference>
<dbReference type="PDB" id="1A5Q">
    <property type="method" value="X-ray"/>
    <property type="resolution" value="2.30 A"/>
    <property type="chains" value="A=27-150"/>
</dbReference>
<dbReference type="PDB" id="1AFK">
    <property type="method" value="X-ray"/>
    <property type="resolution" value="1.70 A"/>
    <property type="chains" value="A/B=27-150"/>
</dbReference>
<dbReference type="PDB" id="1AFL">
    <property type="method" value="X-ray"/>
    <property type="resolution" value="1.70 A"/>
    <property type="chains" value="A/B=27-150"/>
</dbReference>
<dbReference type="PDB" id="1AFU">
    <property type="method" value="X-ray"/>
    <property type="resolution" value="2.00 A"/>
    <property type="chains" value="A/B=27-150"/>
</dbReference>
<dbReference type="PDB" id="1AQP">
    <property type="method" value="X-ray"/>
    <property type="resolution" value="2.00 A"/>
    <property type="chains" value="A=27-150"/>
</dbReference>
<dbReference type="PDB" id="1B6V">
    <property type="method" value="X-ray"/>
    <property type="resolution" value="2.00 A"/>
    <property type="chains" value="A/B=27-150"/>
</dbReference>
<dbReference type="PDB" id="1BEL">
    <property type="method" value="X-ray"/>
    <property type="resolution" value="1.60 A"/>
    <property type="chains" value="A=27-150"/>
</dbReference>
<dbReference type="PDB" id="1BZQ">
    <property type="method" value="X-ray"/>
    <property type="resolution" value="2.80 A"/>
    <property type="chains" value="A/B/C/D=27-150"/>
</dbReference>
<dbReference type="PDB" id="1C0B">
    <property type="method" value="X-ray"/>
    <property type="resolution" value="1.90 A"/>
    <property type="chains" value="A=23-150"/>
</dbReference>
<dbReference type="PDB" id="1C0C">
    <property type="method" value="X-ray"/>
    <property type="resolution" value="2.00 A"/>
    <property type="chains" value="A=23-150"/>
</dbReference>
<dbReference type="PDB" id="1C8W">
    <property type="method" value="X-ray"/>
    <property type="resolution" value="1.80 A"/>
    <property type="chains" value="A=27-150"/>
</dbReference>
<dbReference type="PDB" id="1C9V">
    <property type="method" value="X-ray"/>
    <property type="resolution" value="1.70 A"/>
    <property type="chains" value="A=27-150"/>
</dbReference>
<dbReference type="PDB" id="1C9X">
    <property type="method" value="X-ray"/>
    <property type="resolution" value="1.80 A"/>
    <property type="chains" value="A=27-150"/>
</dbReference>
<dbReference type="PDB" id="1CJQ">
    <property type="method" value="X-ray"/>
    <property type="resolution" value="3.00 A"/>
    <property type="chains" value="A=27-41, B=50-150"/>
</dbReference>
<dbReference type="PDB" id="1CJR">
    <property type="method" value="X-ray"/>
    <property type="resolution" value="2.30 A"/>
    <property type="chains" value="A=27-41, B=50-150"/>
</dbReference>
<dbReference type="PDB" id="1D5D">
    <property type="method" value="X-ray"/>
    <property type="resolution" value="2.25 A"/>
    <property type="chains" value="A=27-41, B=50-150"/>
</dbReference>
<dbReference type="PDB" id="1D5E">
    <property type="method" value="X-ray"/>
    <property type="resolution" value="2.25 A"/>
    <property type="chains" value="A=27-41, B=50-150"/>
</dbReference>
<dbReference type="PDB" id="1D5H">
    <property type="method" value="X-ray"/>
    <property type="resolution" value="2.25 A"/>
    <property type="chains" value="A=27-41, B=50-150"/>
</dbReference>
<dbReference type="PDB" id="1DFJ">
    <property type="method" value="X-ray"/>
    <property type="resolution" value="2.50 A"/>
    <property type="chains" value="E=27-150"/>
</dbReference>
<dbReference type="PDB" id="1DY5">
    <property type="method" value="X-ray"/>
    <property type="resolution" value="0.87 A"/>
    <property type="chains" value="A/B=27-150"/>
</dbReference>
<dbReference type="PDB" id="1EIC">
    <property type="method" value="X-ray"/>
    <property type="resolution" value="1.40 A"/>
    <property type="chains" value="A=27-150"/>
</dbReference>
<dbReference type="PDB" id="1EID">
    <property type="method" value="X-ray"/>
    <property type="resolution" value="1.40 A"/>
    <property type="chains" value="A=27-150"/>
</dbReference>
<dbReference type="PDB" id="1EIE">
    <property type="method" value="X-ray"/>
    <property type="resolution" value="1.40 A"/>
    <property type="chains" value="A=27-150"/>
</dbReference>
<dbReference type="PDB" id="1EOS">
    <property type="method" value="X-ray"/>
    <property type="resolution" value="2.00 A"/>
    <property type="chains" value="A/B=27-150"/>
</dbReference>
<dbReference type="PDB" id="1EOW">
    <property type="method" value="X-ray"/>
    <property type="resolution" value="2.00 A"/>
    <property type="chains" value="A=27-150"/>
</dbReference>
<dbReference type="PDB" id="1F0V">
    <property type="method" value="X-ray"/>
    <property type="resolution" value="1.70 A"/>
    <property type="chains" value="A/B/C/D=27-150"/>
</dbReference>
<dbReference type="PDB" id="1FEV">
    <property type="method" value="X-ray"/>
    <property type="resolution" value="2.25 A"/>
    <property type="chains" value="A=27-41, B=50-150"/>
</dbReference>
<dbReference type="PDB" id="1FS3">
    <property type="method" value="X-ray"/>
    <property type="resolution" value="1.40 A"/>
    <property type="chains" value="A=27-150"/>
</dbReference>
<dbReference type="PDB" id="1GV7">
    <property type="method" value="X-ray"/>
    <property type="resolution" value="2.10 A"/>
    <property type="chains" value="A=84-99"/>
</dbReference>
<dbReference type="PDB" id="1IZP">
    <property type="method" value="X-ray"/>
    <property type="resolution" value="1.50 A"/>
    <property type="chains" value="A=27-150"/>
</dbReference>
<dbReference type="PDB" id="1IZQ">
    <property type="method" value="X-ray"/>
    <property type="resolution" value="1.80 A"/>
    <property type="chains" value="A=27-150"/>
</dbReference>
<dbReference type="PDB" id="1IZR">
    <property type="method" value="X-ray"/>
    <property type="resolution" value="1.50 A"/>
    <property type="chains" value="A=27-150"/>
</dbReference>
<dbReference type="PDB" id="1J7Z">
    <property type="method" value="X-ray"/>
    <property type="resolution" value="2.25 A"/>
    <property type="chains" value="A=27-41, B=47-150"/>
</dbReference>
<dbReference type="PDB" id="1J80">
    <property type="method" value="X-ray"/>
    <property type="resolution" value="2.10 A"/>
    <property type="chains" value="A=27-41, B=47-150"/>
</dbReference>
<dbReference type="PDB" id="1J81">
    <property type="method" value="X-ray"/>
    <property type="resolution" value="2.20 A"/>
    <property type="chains" value="A=27-41, B=47-150"/>
</dbReference>
<dbReference type="PDB" id="1J82">
    <property type="method" value="X-ray"/>
    <property type="resolution" value="2.30 A"/>
    <property type="chains" value="A=27-41, B=47-150"/>
</dbReference>
<dbReference type="PDB" id="1JN4">
    <property type="method" value="X-ray"/>
    <property type="resolution" value="1.80 A"/>
    <property type="chains" value="A/B=27-150"/>
</dbReference>
<dbReference type="PDB" id="1JS0">
    <property type="method" value="X-ray"/>
    <property type="resolution" value="2.20 A"/>
    <property type="chains" value="A/B/C=27-150"/>
</dbReference>
<dbReference type="PDB" id="1JVT">
    <property type="method" value="X-ray"/>
    <property type="resolution" value="2.05 A"/>
    <property type="chains" value="A/B=27-150"/>
</dbReference>
<dbReference type="PDB" id="1JVU">
    <property type="method" value="X-ray"/>
    <property type="resolution" value="1.78 A"/>
    <property type="chains" value="A/B=27-150"/>
</dbReference>
<dbReference type="PDB" id="1JVV">
    <property type="method" value="X-ray"/>
    <property type="resolution" value="2.20 A"/>
    <property type="chains" value="A/B=27-150"/>
</dbReference>
<dbReference type="PDB" id="1KF2">
    <property type="method" value="X-ray"/>
    <property type="resolution" value="1.10 A"/>
    <property type="chains" value="A=27-150"/>
</dbReference>
<dbReference type="PDB" id="1KF3">
    <property type="method" value="X-ray"/>
    <property type="resolution" value="1.05 A"/>
    <property type="chains" value="A=27-150"/>
</dbReference>
<dbReference type="PDB" id="1KF4">
    <property type="method" value="X-ray"/>
    <property type="resolution" value="1.10 A"/>
    <property type="chains" value="A=27-150"/>
</dbReference>
<dbReference type="PDB" id="1KF5">
    <property type="method" value="X-ray"/>
    <property type="resolution" value="1.15 A"/>
    <property type="chains" value="A=27-150"/>
</dbReference>
<dbReference type="PDB" id="1KF7">
    <property type="method" value="X-ray"/>
    <property type="resolution" value="1.15 A"/>
    <property type="chains" value="A=27-150"/>
</dbReference>
<dbReference type="PDB" id="1KF8">
    <property type="method" value="X-ray"/>
    <property type="resolution" value="1.15 A"/>
    <property type="chains" value="A=27-150"/>
</dbReference>
<dbReference type="PDB" id="1KH8">
    <property type="method" value="X-ray"/>
    <property type="resolution" value="2.00 A"/>
    <property type="chains" value="A=27-150"/>
</dbReference>
<dbReference type="PDB" id="1LSQ">
    <property type="method" value="X-ray"/>
    <property type="resolution" value="1.90 A"/>
    <property type="chains" value="A/B=27-150"/>
</dbReference>
<dbReference type="PDB" id="1O0F">
    <property type="method" value="X-ray"/>
    <property type="resolution" value="1.50 A"/>
    <property type="chains" value="A/B=27-150"/>
</dbReference>
<dbReference type="PDB" id="1O0H">
    <property type="method" value="X-ray"/>
    <property type="resolution" value="1.20 A"/>
    <property type="chains" value="A/B=27-150"/>
</dbReference>
<dbReference type="PDB" id="1O0M">
    <property type="method" value="X-ray"/>
    <property type="resolution" value="1.50 A"/>
    <property type="chains" value="A/B=27-150"/>
</dbReference>
<dbReference type="PDB" id="1O0N">
    <property type="method" value="X-ray"/>
    <property type="resolution" value="1.50 A"/>
    <property type="chains" value="A/B=27-150"/>
</dbReference>
<dbReference type="PDB" id="1O0O">
    <property type="method" value="X-ray"/>
    <property type="resolution" value="1.20 A"/>
    <property type="chains" value="A/B=27-150"/>
</dbReference>
<dbReference type="PDB" id="1QHC">
    <property type="method" value="X-ray"/>
    <property type="resolution" value="1.70 A"/>
    <property type="chains" value="A/B=27-150"/>
</dbReference>
<dbReference type="PDB" id="1RAR">
    <property type="method" value="X-ray"/>
    <property type="resolution" value="1.90 A"/>
    <property type="chains" value="A=28-150"/>
</dbReference>
<dbReference type="PDB" id="1RAS">
    <property type="method" value="X-ray"/>
    <property type="resolution" value="1.70 A"/>
    <property type="chains" value="A=28-150"/>
</dbReference>
<dbReference type="PDB" id="1RAT">
    <property type="method" value="X-ray"/>
    <property type="resolution" value="1.50 A"/>
    <property type="chains" value="A=27-150"/>
</dbReference>
<dbReference type="PDB" id="1RBB">
    <property type="method" value="X-ray"/>
    <property type="resolution" value="2.50 A"/>
    <property type="chains" value="A/B=27-150"/>
</dbReference>
<dbReference type="PDB" id="1RBC">
    <property type="method" value="X-ray"/>
    <property type="resolution" value="2.00 A"/>
    <property type="chains" value="A=47-150, S=27-41"/>
</dbReference>
<dbReference type="PDB" id="1RBD">
    <property type="method" value="X-ray"/>
    <property type="resolution" value="1.70 A"/>
    <property type="chains" value="A=47-150, S=27-41"/>
</dbReference>
<dbReference type="PDB" id="1RBE">
    <property type="method" value="X-ray"/>
    <property type="resolution" value="1.75 A"/>
    <property type="chains" value="A=47-150, S=27-41"/>
</dbReference>
<dbReference type="PDB" id="1RBF">
    <property type="method" value="X-ray"/>
    <property type="resolution" value="1.80 A"/>
    <property type="chains" value="A=47-150, S=27-41"/>
</dbReference>
<dbReference type="PDB" id="1RBG">
    <property type="method" value="X-ray"/>
    <property type="resolution" value="1.80 A"/>
    <property type="chains" value="A=47-150, S=27-41"/>
</dbReference>
<dbReference type="PDB" id="1RBH">
    <property type="method" value="X-ray"/>
    <property type="resolution" value="1.70 A"/>
    <property type="chains" value="A=47-150, S=27-41"/>
</dbReference>
<dbReference type="PDB" id="1RBI">
    <property type="method" value="X-ray"/>
    <property type="resolution" value="1.80 A"/>
    <property type="chains" value="A=47-150, S=27-41"/>
</dbReference>
<dbReference type="PDB" id="1RBJ">
    <property type="method" value="X-ray"/>
    <property type="resolution" value="2.70 A"/>
    <property type="chains" value="A=27-150"/>
</dbReference>
<dbReference type="PDB" id="1RBN">
    <property type="method" value="X-ray"/>
    <property type="resolution" value="2.10 A"/>
    <property type="chains" value="A=27-150"/>
</dbReference>
<dbReference type="PDB" id="1RBW">
    <property type="method" value="X-ray"/>
    <property type="resolution" value="1.69 A"/>
    <property type="chains" value="A=27-150"/>
</dbReference>
<dbReference type="PDB" id="1RBX">
    <property type="method" value="X-ray"/>
    <property type="resolution" value="1.69 A"/>
    <property type="chains" value="A=27-150"/>
</dbReference>
<dbReference type="PDB" id="1RCA">
    <property type="method" value="X-ray"/>
    <property type="resolution" value="1.90 A"/>
    <property type="chains" value="A=27-150"/>
</dbReference>
<dbReference type="PDB" id="1RCN">
    <property type="method" value="X-ray"/>
    <property type="resolution" value="2.32 A"/>
    <property type="chains" value="E=27-150"/>
</dbReference>
<dbReference type="PDB" id="1RHA">
    <property type="method" value="X-ray"/>
    <property type="resolution" value="1.80 A"/>
    <property type="chains" value="A=27-150"/>
</dbReference>
<dbReference type="PDB" id="1RHB">
    <property type="method" value="X-ray"/>
    <property type="resolution" value="1.50 A"/>
    <property type="chains" value="A=27-150"/>
</dbReference>
<dbReference type="PDB" id="1RNC">
    <property type="method" value="X-ray"/>
    <property type="resolution" value="1.50 A"/>
    <property type="chains" value="A=27-150"/>
</dbReference>
<dbReference type="PDB" id="1RND">
    <property type="method" value="X-ray"/>
    <property type="resolution" value="1.50 A"/>
    <property type="chains" value="A=27-150"/>
</dbReference>
<dbReference type="PDB" id="1RNM">
    <property type="method" value="X-ray"/>
    <property type="resolution" value="2.00 A"/>
    <property type="chains" value="E=27-150"/>
</dbReference>
<dbReference type="PDB" id="1RNN">
    <property type="method" value="X-ray"/>
    <property type="resolution" value="1.80 A"/>
    <property type="chains" value="E=27-150"/>
</dbReference>
<dbReference type="PDB" id="1RNO">
    <property type="method" value="X-ray"/>
    <property type="resolution" value="1.90 A"/>
    <property type="chains" value="A=27-150"/>
</dbReference>
<dbReference type="PDB" id="1RNQ">
    <property type="method" value="X-ray"/>
    <property type="resolution" value="2.00 A"/>
    <property type="chains" value="A=27-150"/>
</dbReference>
<dbReference type="PDB" id="1RNU">
    <property type="method" value="X-ray"/>
    <property type="resolution" value="1.60 A"/>
    <property type="chains" value="A=27-150"/>
</dbReference>
<dbReference type="PDB" id="1RNV">
    <property type="method" value="X-ray"/>
    <property type="resolution" value="1.60 A"/>
    <property type="chains" value="A=27-150"/>
</dbReference>
<dbReference type="PDB" id="1RNW">
    <property type="method" value="X-ray"/>
    <property type="resolution" value="1.80 A"/>
    <property type="chains" value="A=27-150"/>
</dbReference>
<dbReference type="PDB" id="1RNX">
    <property type="method" value="X-ray"/>
    <property type="resolution" value="1.90 A"/>
    <property type="chains" value="A=27-150"/>
</dbReference>
<dbReference type="PDB" id="1RNY">
    <property type="method" value="X-ray"/>
    <property type="resolution" value="2.00 A"/>
    <property type="chains" value="A=27-150"/>
</dbReference>
<dbReference type="PDB" id="1RNZ">
    <property type="method" value="X-ray"/>
    <property type="resolution" value="1.90 A"/>
    <property type="chains" value="A=27-150"/>
</dbReference>
<dbReference type="PDB" id="1ROB">
    <property type="method" value="X-ray"/>
    <property type="resolution" value="1.60 A"/>
    <property type="chains" value="A=27-150"/>
</dbReference>
<dbReference type="PDB" id="1RPF">
    <property type="method" value="X-ray"/>
    <property type="resolution" value="2.20 A"/>
    <property type="chains" value="A=27-150"/>
</dbReference>
<dbReference type="PDB" id="1RPG">
    <property type="method" value="X-ray"/>
    <property type="resolution" value="1.40 A"/>
    <property type="chains" value="A=27-150"/>
</dbReference>
<dbReference type="PDB" id="1RPH">
    <property type="method" value="X-ray"/>
    <property type="resolution" value="2.20 A"/>
    <property type="chains" value="A=27-150"/>
</dbReference>
<dbReference type="PDB" id="1RSM">
    <property type="method" value="X-ray"/>
    <property type="resolution" value="2.00 A"/>
    <property type="chains" value="A=27-150"/>
</dbReference>
<dbReference type="PDB" id="1RTA">
    <property type="method" value="X-ray"/>
    <property type="resolution" value="2.50 A"/>
    <property type="chains" value="E=27-150"/>
</dbReference>
<dbReference type="PDB" id="1RTB">
    <property type="method" value="X-ray"/>
    <property type="resolution" value="2.50 A"/>
    <property type="chains" value="A=27-150"/>
</dbReference>
<dbReference type="PDB" id="1RUV">
    <property type="method" value="X-ray"/>
    <property type="resolution" value="1.25 A"/>
    <property type="chains" value="A=27-150"/>
</dbReference>
<dbReference type="PDB" id="1SRN">
    <property type="method" value="X-ray"/>
    <property type="resolution" value="1.80 A"/>
    <property type="chains" value="A=27-144, B=137-150"/>
</dbReference>
<dbReference type="PDB" id="1SSA">
    <property type="method" value="X-ray"/>
    <property type="resolution" value="2.00 A"/>
    <property type="chains" value="A=27-144, B=137-150"/>
</dbReference>
<dbReference type="PDB" id="1SSB">
    <property type="method" value="X-ray"/>
    <property type="resolution" value="2.00 A"/>
    <property type="chains" value="A=27-144, B=137-150"/>
</dbReference>
<dbReference type="PDB" id="1SSC">
    <property type="method" value="X-ray"/>
    <property type="resolution" value="2.00 A"/>
    <property type="chains" value="A=27-138, B=140-150"/>
</dbReference>
<dbReference type="PDB" id="1U1B">
    <property type="method" value="X-ray"/>
    <property type="resolution" value="2.00 A"/>
    <property type="chains" value="A/B=27-150"/>
</dbReference>
<dbReference type="PDB" id="1UN5">
    <property type="method" value="X-ray"/>
    <property type="resolution" value="2.60 A"/>
    <property type="chains" value="A=64-74"/>
</dbReference>
<dbReference type="PDB" id="1W4O">
    <property type="method" value="X-ray"/>
    <property type="resolution" value="1.60 A"/>
    <property type="chains" value="A/B=27-150"/>
</dbReference>
<dbReference type="PDB" id="1W4P">
    <property type="method" value="X-ray"/>
    <property type="resolution" value="1.69 A"/>
    <property type="chains" value="A/B=27-150"/>
</dbReference>
<dbReference type="PDB" id="1W4Q">
    <property type="method" value="X-ray"/>
    <property type="resolution" value="1.68 A"/>
    <property type="chains" value="A/B=27-150"/>
</dbReference>
<dbReference type="PDB" id="1WBU">
    <property type="method" value="X-ray"/>
    <property type="resolution" value="1.90 A"/>
    <property type="chains" value="A/B=27-150"/>
</dbReference>
<dbReference type="PDB" id="1XPS">
    <property type="method" value="X-ray"/>
    <property type="resolution" value="1.80 A"/>
    <property type="chains" value="A/B=27-150"/>
</dbReference>
<dbReference type="PDB" id="1XPT">
    <property type="method" value="X-ray"/>
    <property type="resolution" value="1.90 A"/>
    <property type="chains" value="A/B=27-150"/>
</dbReference>
<dbReference type="PDB" id="1YMN">
    <property type="method" value="X-ray"/>
    <property type="resolution" value="1.45 A"/>
    <property type="chains" value="A=27-150"/>
</dbReference>
<dbReference type="PDB" id="1YMR">
    <property type="method" value="X-ray"/>
    <property type="resolution" value="1.50 A"/>
    <property type="chains" value="A=27-150"/>
</dbReference>
<dbReference type="PDB" id="1YMW">
    <property type="method" value="X-ray"/>
    <property type="resolution" value="1.50 A"/>
    <property type="chains" value="A=27-150"/>
</dbReference>
<dbReference type="PDB" id="1Z3L">
    <property type="method" value="X-ray"/>
    <property type="resolution" value="1.80 A"/>
    <property type="chains" value="E=47-150, S=27-41"/>
</dbReference>
<dbReference type="PDB" id="1Z3M">
    <property type="method" value="X-ray"/>
    <property type="resolution" value="2.00 A"/>
    <property type="chains" value="E=47-150, S=27-41"/>
</dbReference>
<dbReference type="PDB" id="1Z3P">
    <property type="method" value="X-ray"/>
    <property type="resolution" value="2.00 A"/>
    <property type="chains" value="E=47-150, S=27-41"/>
</dbReference>
<dbReference type="PDB" id="1Z6D">
    <property type="method" value="X-ray"/>
    <property type="resolution" value="1.54 A"/>
    <property type="chains" value="A/B=27-150"/>
</dbReference>
<dbReference type="PDB" id="1Z6S">
    <property type="method" value="X-ray"/>
    <property type="resolution" value="1.50 A"/>
    <property type="chains" value="A/B=27-150"/>
</dbReference>
<dbReference type="PDB" id="2AAS">
    <property type="method" value="NMR"/>
    <property type="chains" value="A=27-150"/>
</dbReference>
<dbReference type="PDB" id="2APQ">
    <property type="method" value="X-ray"/>
    <property type="resolution" value="1.80 A"/>
    <property type="chains" value="A=27-150"/>
</dbReference>
<dbReference type="PDB" id="2BLP">
    <property type="method" value="X-ray"/>
    <property type="resolution" value="1.40 A"/>
    <property type="chains" value="A=27-150"/>
</dbReference>
<dbReference type="PDB" id="2BLZ">
    <property type="method" value="X-ray"/>
    <property type="resolution" value="1.40 A"/>
    <property type="chains" value="A=27-150"/>
</dbReference>
<dbReference type="PDB" id="2E33">
    <property type="method" value="X-ray"/>
    <property type="resolution" value="2.70 A"/>
    <property type="chains" value="B=27-150"/>
</dbReference>
<dbReference type="PDB" id="2E3W">
    <property type="method" value="X-ray"/>
    <property type="resolution" value="1.05 A"/>
    <property type="chains" value="A=27-150"/>
</dbReference>
<dbReference type="PDB" id="2G4W">
    <property type="method" value="X-ray"/>
    <property type="resolution" value="1.84 A"/>
    <property type="chains" value="A/B=27-150"/>
</dbReference>
<dbReference type="PDB" id="2G4X">
    <property type="method" value="X-ray"/>
    <property type="resolution" value="1.95 A"/>
    <property type="chains" value="A=27-150"/>
</dbReference>
<dbReference type="PDB" id="2G8Q">
    <property type="method" value="X-ray"/>
    <property type="resolution" value="1.50 A"/>
    <property type="chains" value="A/B=27-150"/>
</dbReference>
<dbReference type="PDB" id="2G8R">
    <property type="method" value="X-ray"/>
    <property type="resolution" value="1.70 A"/>
    <property type="chains" value="A/B=27-150"/>
</dbReference>
<dbReference type="PDB" id="2NUI">
    <property type="method" value="X-ray"/>
    <property type="resolution" value="1.10 A"/>
    <property type="chains" value="A=27-150"/>
</dbReference>
<dbReference type="PDB" id="2OP2">
    <property type="method" value="X-ray"/>
    <property type="resolution" value="1.60 A"/>
    <property type="chains" value="A=27-150"/>
</dbReference>
<dbReference type="PDB" id="2OQF">
    <property type="method" value="X-ray"/>
    <property type="resolution" value="2.30 A"/>
    <property type="chains" value="A/B/C/D=27-150"/>
</dbReference>
<dbReference type="PDB" id="2P42">
    <property type="method" value="X-ray"/>
    <property type="resolution" value="1.80 A"/>
    <property type="chains" value="A/C=27-150"/>
</dbReference>
<dbReference type="PDB" id="2P43">
    <property type="method" value="X-ray"/>
    <property type="resolution" value="1.65 A"/>
    <property type="chains" value="A=27-150"/>
</dbReference>
<dbReference type="PDB" id="2P44">
    <property type="method" value="X-ray"/>
    <property type="resolution" value="1.80 A"/>
    <property type="chains" value="A=27-150"/>
</dbReference>
<dbReference type="PDB" id="2P45">
    <property type="method" value="X-ray"/>
    <property type="resolution" value="1.10 A"/>
    <property type="chains" value="A=27-150"/>
</dbReference>
<dbReference type="PDB" id="2P46">
    <property type="method" value="X-ray"/>
    <property type="resolution" value="2.50 A"/>
    <property type="chains" value="A/C=27-150"/>
</dbReference>
<dbReference type="PDB" id="2P47">
    <property type="method" value="X-ray"/>
    <property type="resolution" value="2.50 A"/>
    <property type="chains" value="A=27-150"/>
</dbReference>
<dbReference type="PDB" id="2P48">
    <property type="method" value="X-ray"/>
    <property type="resolution" value="2.30 A"/>
    <property type="chains" value="A=27-150"/>
</dbReference>
<dbReference type="PDB" id="2P49">
    <property type="method" value="X-ray"/>
    <property type="resolution" value="1.38 A"/>
    <property type="chains" value="A=27-150"/>
</dbReference>
<dbReference type="PDB" id="2P4A">
    <property type="method" value="X-ray"/>
    <property type="resolution" value="1.90 A"/>
    <property type="chains" value="A/C=27-150"/>
</dbReference>
<dbReference type="PDB" id="2QCA">
    <property type="method" value="X-ray"/>
    <property type="resolution" value="1.33 A"/>
    <property type="chains" value="A=27-150"/>
</dbReference>
<dbReference type="PDB" id="2RAT">
    <property type="method" value="X-ray"/>
    <property type="resolution" value="1.50 A"/>
    <property type="chains" value="A=27-150"/>
</dbReference>
<dbReference type="PDB" id="2RLN">
    <property type="method" value="X-ray"/>
    <property type="resolution" value="1.85 A"/>
    <property type="chains" value="E=42-150, S=27-41"/>
</dbReference>
<dbReference type="PDB" id="2RNS">
    <property type="method" value="X-ray"/>
    <property type="resolution" value="1.60 A"/>
    <property type="chains" value="A=27-150"/>
</dbReference>
<dbReference type="PDB" id="2W5G">
    <property type="method" value="X-ray"/>
    <property type="resolution" value="1.70 A"/>
    <property type="chains" value="A/B=27-150"/>
</dbReference>
<dbReference type="PDB" id="2W5I">
    <property type="method" value="X-ray"/>
    <property type="resolution" value="2.40 A"/>
    <property type="chains" value="A/B=27-150"/>
</dbReference>
<dbReference type="PDB" id="2W5K">
    <property type="method" value="X-ray"/>
    <property type="resolution" value="1.70 A"/>
    <property type="chains" value="A/B=27-150"/>
</dbReference>
<dbReference type="PDB" id="2W5L">
    <property type="method" value="X-ray"/>
    <property type="resolution" value="1.70 A"/>
    <property type="chains" value="A/B=27-150"/>
</dbReference>
<dbReference type="PDB" id="2W5M">
    <property type="method" value="X-ray"/>
    <property type="resolution" value="1.80 A"/>
    <property type="chains" value="A/B=27-150"/>
</dbReference>
<dbReference type="PDB" id="2XOG">
    <property type="method" value="X-ray"/>
    <property type="resolution" value="1.72 A"/>
    <property type="chains" value="A/B=27-150"/>
</dbReference>
<dbReference type="PDB" id="2XOI">
    <property type="method" value="X-ray"/>
    <property type="resolution" value="1.72 A"/>
    <property type="chains" value="A/B=27-150"/>
</dbReference>
<dbReference type="PDB" id="3A1R">
    <property type="method" value="Neutron"/>
    <property type="resolution" value="1.70 A"/>
    <property type="chains" value="A=27-150"/>
</dbReference>
<dbReference type="PDB" id="3D6O">
    <property type="method" value="X-ray"/>
    <property type="resolution" value="1.58 A"/>
    <property type="chains" value="A/B=27-150"/>
</dbReference>
<dbReference type="PDB" id="3D6P">
    <property type="method" value="X-ray"/>
    <property type="resolution" value="1.60 A"/>
    <property type="chains" value="A/B=27-150"/>
</dbReference>
<dbReference type="PDB" id="3D6Q">
    <property type="method" value="X-ray"/>
    <property type="resolution" value="1.60 A"/>
    <property type="chains" value="A/B=27-150"/>
</dbReference>
<dbReference type="PDB" id="3D7B">
    <property type="method" value="X-ray"/>
    <property type="resolution" value="1.60 A"/>
    <property type="chains" value="A/B=27-150"/>
</dbReference>
<dbReference type="PDB" id="3D8Y">
    <property type="method" value="X-ray"/>
    <property type="resolution" value="1.72 A"/>
    <property type="chains" value="A/B=27-150"/>
</dbReference>
<dbReference type="PDB" id="3D8Z">
    <property type="method" value="X-ray"/>
    <property type="resolution" value="1.98 A"/>
    <property type="chains" value="A/B=27-150"/>
</dbReference>
<dbReference type="PDB" id="3DH5">
    <property type="method" value="X-ray"/>
    <property type="resolution" value="1.60 A"/>
    <property type="chains" value="A=27-150"/>
</dbReference>
<dbReference type="PDB" id="3DH6">
    <property type="method" value="X-ray"/>
    <property type="resolution" value="1.60 A"/>
    <property type="chains" value="A=27-150"/>
</dbReference>
<dbReference type="PDB" id="3DI7">
    <property type="method" value="X-ray"/>
    <property type="resolution" value="1.60 A"/>
    <property type="chains" value="A=27-150"/>
</dbReference>
<dbReference type="PDB" id="3DI8">
    <property type="method" value="X-ray"/>
    <property type="resolution" value="1.60 A"/>
    <property type="chains" value="A=27-150"/>
</dbReference>
<dbReference type="PDB" id="3DI9">
    <property type="method" value="X-ray"/>
    <property type="resolution" value="2.00 A"/>
    <property type="chains" value="A=27-150"/>
</dbReference>
<dbReference type="PDB" id="3DIB">
    <property type="method" value="X-ray"/>
    <property type="resolution" value="1.40 A"/>
    <property type="chains" value="A=27-150"/>
</dbReference>
<dbReference type="PDB" id="3DIC">
    <property type="method" value="X-ray"/>
    <property type="resolution" value="1.60 A"/>
    <property type="chains" value="A=27-150"/>
</dbReference>
<dbReference type="PDB" id="3DXG">
    <property type="method" value="X-ray"/>
    <property type="resolution" value="1.39 A"/>
    <property type="chains" value="A/B=27-150"/>
</dbReference>
<dbReference type="PDB" id="3DXH">
    <property type="method" value="X-ray"/>
    <property type="resolution" value="1.40 A"/>
    <property type="chains" value="A/B=27-150"/>
</dbReference>
<dbReference type="PDB" id="3EUX">
    <property type="method" value="X-ray"/>
    <property type="resolution" value="1.65 A"/>
    <property type="chains" value="A/B=27-150"/>
</dbReference>
<dbReference type="PDB" id="3EUY">
    <property type="method" value="X-ray"/>
    <property type="resolution" value="1.95 A"/>
    <property type="chains" value="A/B=27-150"/>
</dbReference>
<dbReference type="PDB" id="3EUZ">
    <property type="method" value="X-ray"/>
    <property type="resolution" value="1.84 A"/>
    <property type="chains" value="A/B=27-150"/>
</dbReference>
<dbReference type="PDB" id="3EV0">
    <property type="method" value="X-ray"/>
    <property type="resolution" value="1.76 A"/>
    <property type="chains" value="A/B=27-150"/>
</dbReference>
<dbReference type="PDB" id="3EV1">
    <property type="method" value="X-ray"/>
    <property type="resolution" value="2.00 A"/>
    <property type="chains" value="A/B=27-150"/>
</dbReference>
<dbReference type="PDB" id="3EV2">
    <property type="method" value="X-ray"/>
    <property type="resolution" value="2.02 A"/>
    <property type="chains" value="A/B=27-150"/>
</dbReference>
<dbReference type="PDB" id="3EV3">
    <property type="method" value="X-ray"/>
    <property type="resolution" value="1.68 A"/>
    <property type="chains" value="A/B=27-150"/>
</dbReference>
<dbReference type="PDB" id="3EV4">
    <property type="method" value="X-ray"/>
    <property type="resolution" value="1.93 A"/>
    <property type="chains" value="A/B=27-150"/>
</dbReference>
<dbReference type="PDB" id="3EV5">
    <property type="method" value="X-ray"/>
    <property type="resolution" value="1.68 A"/>
    <property type="chains" value="A/B=27-150"/>
</dbReference>
<dbReference type="PDB" id="3EV6">
    <property type="method" value="X-ray"/>
    <property type="resolution" value="1.76 A"/>
    <property type="chains" value="A/B=27-150"/>
</dbReference>
<dbReference type="PDB" id="3FKZ">
    <property type="method" value="X-ray"/>
    <property type="resolution" value="1.99 A"/>
    <property type="chains" value="A/B=27-150"/>
</dbReference>
<dbReference type="PDB" id="3FL0">
    <property type="method" value="X-ray"/>
    <property type="resolution" value="1.94 A"/>
    <property type="chains" value="A/B=27-150"/>
</dbReference>
<dbReference type="PDB" id="3FL1">
    <property type="method" value="X-ray"/>
    <property type="resolution" value="1.90 A"/>
    <property type="chains" value="A/B=27-150"/>
</dbReference>
<dbReference type="PDB" id="3FL3">
    <property type="method" value="X-ray"/>
    <property type="resolution" value="1.60 A"/>
    <property type="chains" value="A/B=27-150"/>
</dbReference>
<dbReference type="PDB" id="3I67">
    <property type="method" value="X-ray"/>
    <property type="resolution" value="1.30 A"/>
    <property type="chains" value="A=27-150"/>
</dbReference>
<dbReference type="PDB" id="3I6F">
    <property type="method" value="X-ray"/>
    <property type="resolution" value="1.30 A"/>
    <property type="chains" value="A=27-150"/>
</dbReference>
<dbReference type="PDB" id="3I6H">
    <property type="method" value="X-ray"/>
    <property type="resolution" value="1.30 A"/>
    <property type="chains" value="A=27-150"/>
</dbReference>
<dbReference type="PDB" id="3I6J">
    <property type="method" value="X-ray"/>
    <property type="resolution" value="1.30 A"/>
    <property type="chains" value="A=27-150"/>
</dbReference>
<dbReference type="PDB" id="3I7W">
    <property type="method" value="X-ray"/>
    <property type="resolution" value="2.35 A"/>
    <property type="chains" value="A=27-150"/>
</dbReference>
<dbReference type="PDB" id="3I7X">
    <property type="method" value="X-ray"/>
    <property type="resolution" value="2.60 A"/>
    <property type="chains" value="A=27-150"/>
</dbReference>
<dbReference type="PDB" id="3I7Y">
    <property type="method" value="X-ray"/>
    <property type="resolution" value="2.40 A"/>
    <property type="chains" value="A=27-150"/>
</dbReference>
<dbReference type="PDB" id="3JW1">
    <property type="method" value="X-ray"/>
    <property type="resolution" value="1.60 A"/>
    <property type="chains" value="A/B=27-150"/>
</dbReference>
<dbReference type="PDB" id="3LXO">
    <property type="method" value="X-ray"/>
    <property type="resolution" value="1.55 A"/>
    <property type="chains" value="A=27-150"/>
</dbReference>
<dbReference type="PDB" id="3MWQ">
    <property type="method" value="X-ray"/>
    <property type="resolution" value="1.68 A"/>
    <property type="chains" value="A=26-150"/>
</dbReference>
<dbReference type="PDB" id="3MWR">
    <property type="method" value="X-ray"/>
    <property type="resolution" value="1.85 A"/>
    <property type="chains" value="A=27-150"/>
</dbReference>
<dbReference type="PDB" id="3MX8">
    <property type="method" value="X-ray"/>
    <property type="resolution" value="2.10 A"/>
    <property type="chains" value="A=26-150"/>
</dbReference>
<dbReference type="PDB" id="3MZQ">
    <property type="method" value="X-ray"/>
    <property type="resolution" value="1.50 A"/>
    <property type="chains" value="A=23-150"/>
</dbReference>
<dbReference type="PDB" id="3MZR">
    <property type="method" value="X-ray"/>
    <property type="resolution" value="1.50 A"/>
    <property type="chains" value="A=23-150"/>
</dbReference>
<dbReference type="PDB" id="3OQY">
    <property type="method" value="X-ray"/>
    <property type="resolution" value="1.49 A"/>
    <property type="chains" value="A/B=47-150, a/b=27-41"/>
</dbReference>
<dbReference type="PDB" id="3OQZ">
    <property type="method" value="X-ray"/>
    <property type="resolution" value="2.50 A"/>
    <property type="chains" value="A/B=47-150, a/b=27-41"/>
</dbReference>
<dbReference type="PDB" id="3OR0">
    <property type="method" value="X-ray"/>
    <property type="resolution" value="2.30 A"/>
    <property type="chains" value="A/B=47-150, a/b=27-41"/>
</dbReference>
<dbReference type="PDB" id="3QL1">
    <property type="method" value="X-ray"/>
    <property type="resolution" value="1.29 A"/>
    <property type="chains" value="A=27-150"/>
</dbReference>
<dbReference type="PDB" id="3QL2">
    <property type="method" value="X-ray"/>
    <property type="resolution" value="1.49 A"/>
    <property type="chains" value="A/B=27-150"/>
</dbReference>
<dbReference type="PDB" id="3QSK">
    <property type="method" value="X-ray"/>
    <property type="resolution" value="1.75 A"/>
    <property type="chains" value="A=27-150"/>
</dbReference>
<dbReference type="PDB" id="3RAT">
    <property type="method" value="X-ray"/>
    <property type="resolution" value="1.50 A"/>
    <property type="chains" value="A=27-150"/>
</dbReference>
<dbReference type="PDB" id="3RH1">
    <property type="method" value="X-ray"/>
    <property type="resolution" value="2.10 A"/>
    <property type="chains" value="A=27-150"/>
</dbReference>
<dbReference type="PDB" id="3RID">
    <property type="method" value="X-ray"/>
    <property type="resolution" value="2.18 A"/>
    <property type="chains" value="A/B/C/D=27-150"/>
</dbReference>
<dbReference type="PDB" id="3RN3">
    <property type="method" value="X-ray"/>
    <property type="resolution" value="1.45 A"/>
    <property type="chains" value="A=27-150"/>
</dbReference>
<dbReference type="PDB" id="3RSD">
    <property type="method" value="X-ray"/>
    <property type="resolution" value="1.60 A"/>
    <property type="chains" value="A=27-150"/>
</dbReference>
<dbReference type="PDB" id="3RSK">
    <property type="method" value="X-ray"/>
    <property type="resolution" value="2.00 A"/>
    <property type="chains" value="A=27-150"/>
</dbReference>
<dbReference type="PDB" id="3RSP">
    <property type="method" value="X-ray"/>
    <property type="resolution" value="1.70 A"/>
    <property type="chains" value="A=27-150"/>
</dbReference>
<dbReference type="PDB" id="3SRN">
    <property type="method" value="X-ray"/>
    <property type="resolution" value="2.00 A"/>
    <property type="chains" value="A=27-139, B=140-146"/>
</dbReference>
<dbReference type="PDB" id="4AO1">
    <property type="method" value="X-ray"/>
    <property type="resolution" value="1.58 A"/>
    <property type="chains" value="A=27-150"/>
</dbReference>
<dbReference type="PDB" id="4G8V">
    <property type="method" value="X-ray"/>
    <property type="resolution" value="1.70 A"/>
    <property type="chains" value="A/B=27-150"/>
</dbReference>
<dbReference type="PDB" id="4G8Y">
    <property type="method" value="X-ray"/>
    <property type="resolution" value="1.80 A"/>
    <property type="chains" value="A/B=27-150"/>
</dbReference>
<dbReference type="PDB" id="4G90">
    <property type="method" value="X-ray"/>
    <property type="resolution" value="1.90 A"/>
    <property type="chains" value="A/B=27-150"/>
</dbReference>
<dbReference type="PDB" id="4J5Z">
    <property type="method" value="X-ray"/>
    <property type="resolution" value="1.80 A"/>
    <property type="chains" value="A=27-150"/>
</dbReference>
<dbReference type="PDB" id="4J60">
    <property type="method" value="X-ray"/>
    <property type="resolution" value="1.69 A"/>
    <property type="chains" value="A=27-150"/>
</dbReference>
<dbReference type="PDB" id="4J61">
    <property type="method" value="X-ray"/>
    <property type="resolution" value="1.69 A"/>
    <property type="chains" value="A=27-150"/>
</dbReference>
<dbReference type="PDB" id="4J62">
    <property type="method" value="X-ray"/>
    <property type="resolution" value="2.04 A"/>
    <property type="chains" value="A=27-150"/>
</dbReference>
<dbReference type="PDB" id="4J63">
    <property type="method" value="X-ray"/>
    <property type="resolution" value="2.04 A"/>
    <property type="chains" value="A=27-150"/>
</dbReference>
<dbReference type="PDB" id="4J64">
    <property type="method" value="X-ray"/>
    <property type="resolution" value="1.78 A"/>
    <property type="chains" value="A=27-150"/>
</dbReference>
<dbReference type="PDB" id="4J65">
    <property type="method" value="X-ray"/>
    <property type="resolution" value="1.96 A"/>
    <property type="chains" value="A=27-150"/>
</dbReference>
<dbReference type="PDB" id="4J66">
    <property type="method" value="X-ray"/>
    <property type="resolution" value="2.04 A"/>
    <property type="chains" value="A=27-150"/>
</dbReference>
<dbReference type="PDB" id="4J67">
    <property type="method" value="X-ray"/>
    <property type="resolution" value="1.86 A"/>
    <property type="chains" value="A=27-150"/>
</dbReference>
<dbReference type="PDB" id="4J68">
    <property type="method" value="X-ray"/>
    <property type="resolution" value="1.78 A"/>
    <property type="chains" value="A=27-150"/>
</dbReference>
<dbReference type="PDB" id="4J69">
    <property type="method" value="X-ray"/>
    <property type="resolution" value="1.89 A"/>
    <property type="chains" value="A=27-150"/>
</dbReference>
<dbReference type="PDB" id="4J6A">
    <property type="method" value="X-ray"/>
    <property type="resolution" value="2.04 A"/>
    <property type="chains" value="A=27-150"/>
</dbReference>
<dbReference type="PDB" id="4K7L">
    <property type="method" value="X-ray"/>
    <property type="resolution" value="1.38 A"/>
    <property type="chains" value="A=27-41, B=47-150"/>
</dbReference>
<dbReference type="PDB" id="4K7M">
    <property type="method" value="X-ray"/>
    <property type="resolution" value="1.80 A"/>
    <property type="chains" value="A=27-150"/>
</dbReference>
<dbReference type="PDB" id="4L55">
    <property type="method" value="X-ray"/>
    <property type="resolution" value="1.65 A"/>
    <property type="chains" value="A/B=27-150"/>
</dbReference>
<dbReference type="PDB" id="4MXF">
    <property type="method" value="X-ray"/>
    <property type="resolution" value="2.25 A"/>
    <property type="chains" value="A/B=27-150"/>
</dbReference>
<dbReference type="PDB" id="4O36">
    <property type="method" value="X-ray"/>
    <property type="resolution" value="1.22 A"/>
    <property type="chains" value="A=27-41, B=47-150"/>
</dbReference>
<dbReference type="PDB" id="4O37">
    <property type="method" value="X-ray"/>
    <property type="resolution" value="1.40 A"/>
    <property type="chains" value="A=27-41, B=47-150"/>
</dbReference>
<dbReference type="PDB" id="4OKF">
    <property type="method" value="X-ray"/>
    <property type="resolution" value="1.54 A"/>
    <property type="chains" value="A=27-41, B=47-150"/>
</dbReference>
<dbReference type="PDB" id="4OOH">
    <property type="method" value="X-ray"/>
    <property type="resolution" value="1.89 A"/>
    <property type="chains" value="A=27-150"/>
</dbReference>
<dbReference type="PDB" id="4OT4">
    <property type="method" value="X-ray"/>
    <property type="resolution" value="1.85 A"/>
    <property type="chains" value="A/B=27-150"/>
</dbReference>
<dbReference type="PDB" id="4PEQ">
    <property type="method" value="X-ray"/>
    <property type="resolution" value="2.21 A"/>
    <property type="chains" value="A/C=27-150"/>
</dbReference>
<dbReference type="PDB" id="4POU">
    <property type="method" value="X-ray"/>
    <property type="resolution" value="1.75 A"/>
    <property type="chains" value="A=27-150"/>
</dbReference>
<dbReference type="PDB" id="4QH3">
    <property type="method" value="X-ray"/>
    <property type="resolution" value="2.00 A"/>
    <property type="chains" value="A/B=27-150"/>
</dbReference>
<dbReference type="PDB" id="4RAT">
    <property type="method" value="X-ray"/>
    <property type="resolution" value="1.50 A"/>
    <property type="chains" value="A=27-150"/>
</dbReference>
<dbReference type="PDB" id="4RSD">
    <property type="method" value="X-ray"/>
    <property type="resolution" value="1.60 A"/>
    <property type="chains" value="A=27-150"/>
</dbReference>
<dbReference type="PDB" id="4RSK">
    <property type="method" value="X-ray"/>
    <property type="resolution" value="2.10 A"/>
    <property type="chains" value="A=27-150"/>
</dbReference>
<dbReference type="PDB" id="4RTE">
    <property type="method" value="X-ray"/>
    <property type="resolution" value="1.95 A"/>
    <property type="chains" value="A=27-150"/>
</dbReference>
<dbReference type="PDB" id="4S0Q">
    <property type="method" value="X-ray"/>
    <property type="resolution" value="2.09 A"/>
    <property type="chains" value="A/B=27-150"/>
</dbReference>
<dbReference type="PDB" id="4S18">
    <property type="method" value="X-ray"/>
    <property type="resolution" value="2.27 A"/>
    <property type="chains" value="A/B=27-150"/>
</dbReference>
<dbReference type="PDB" id="4SRN">
    <property type="method" value="X-ray"/>
    <property type="resolution" value="2.00 A"/>
    <property type="chains" value="A=27-139, B=140-150"/>
</dbReference>
<dbReference type="PDB" id="4WYN">
    <property type="method" value="X-ray"/>
    <property type="resolution" value="1.80 A"/>
    <property type="chains" value="A/B=27-150"/>
</dbReference>
<dbReference type="PDB" id="4WYP">
    <property type="method" value="X-ray"/>
    <property type="resolution" value="1.50 A"/>
    <property type="chains" value="A/B=27-150"/>
</dbReference>
<dbReference type="PDB" id="4WYZ">
    <property type="method" value="X-ray"/>
    <property type="resolution" value="1.45 A"/>
    <property type="chains" value="A/B=27-150"/>
</dbReference>
<dbReference type="PDB" id="4YGW">
    <property type="method" value="X-ray"/>
    <property type="resolution" value="2.18 A"/>
    <property type="chains" value="B=48-150, b=27-41"/>
</dbReference>
<dbReference type="PDB" id="4ZZ4">
    <property type="method" value="Neutron"/>
    <property type="resolution" value="1.80 A"/>
    <property type="chains" value="A=27-150"/>
</dbReference>
<dbReference type="PDB" id="5D6U">
    <property type="method" value="X-ray"/>
    <property type="resolution" value="1.52 A"/>
    <property type="chains" value="A=27-150"/>
</dbReference>
<dbReference type="PDB" id="5D97">
    <property type="method" value="Neutron"/>
    <property type="resolution" value="1.80 A"/>
    <property type="chains" value="A=27-150"/>
</dbReference>
<dbReference type="PDB" id="5E5E">
    <property type="method" value="X-ray"/>
    <property type="resolution" value="1.98 A"/>
    <property type="chains" value="A/B=27-150"/>
</dbReference>
<dbReference type="PDB" id="5E5F">
    <property type="method" value="X-ray"/>
    <property type="resolution" value="1.68 A"/>
    <property type="chains" value="A/B=27-150"/>
</dbReference>
<dbReference type="PDB" id="5ET4">
    <property type="method" value="X-ray"/>
    <property type="resolution" value="2.10 A"/>
    <property type="chains" value="A/B/C/D=27-150"/>
</dbReference>
<dbReference type="PDB" id="5JLG">
    <property type="method" value="X-ray"/>
    <property type="resolution" value="1.79 A"/>
    <property type="chains" value="A/B=27-150"/>
</dbReference>
<dbReference type="PDB" id="5JMG">
    <property type="method" value="X-ray"/>
    <property type="resolution" value="1.85 A"/>
    <property type="chains" value="A/B=27-150"/>
</dbReference>
<dbReference type="PDB" id="5JML">
    <property type="method" value="X-ray"/>
    <property type="resolution" value="2.29 A"/>
    <property type="chains" value="A/B=27-150"/>
</dbReference>
<dbReference type="PDB" id="5NA9">
    <property type="method" value="X-ray"/>
    <property type="resolution" value="2.07 A"/>
    <property type="chains" value="A=27-150"/>
</dbReference>
<dbReference type="PDB" id="5NJ7">
    <property type="method" value="X-ray"/>
    <property type="resolution" value="2.15 A"/>
    <property type="chains" value="A/B=27-150"/>
</dbReference>
<dbReference type="PDB" id="5OBC">
    <property type="method" value="X-ray"/>
    <property type="resolution" value="2.07 A"/>
    <property type="chains" value="A/B=27-150"/>
</dbReference>
<dbReference type="PDB" id="5OBD">
    <property type="method" value="X-ray"/>
    <property type="resolution" value="1.98 A"/>
    <property type="chains" value="A/B=27-150"/>
</dbReference>
<dbReference type="PDB" id="5OBE">
    <property type="method" value="X-ray"/>
    <property type="resolution" value="1.82 A"/>
    <property type="chains" value="A/B=27-150"/>
</dbReference>
<dbReference type="PDB" id="5OGH">
    <property type="method" value="X-ray"/>
    <property type="resolution" value="1.16 A"/>
    <property type="chains" value="A=27-150"/>
</dbReference>
<dbReference type="PDB" id="5OLD">
    <property type="method" value="X-ray"/>
    <property type="resolution" value="1.78 A"/>
    <property type="chains" value="A/B=27-150"/>
</dbReference>
<dbReference type="PDB" id="5RAT">
    <property type="method" value="X-ray"/>
    <property type="resolution" value="1.50 A"/>
    <property type="chains" value="A=27-150"/>
</dbReference>
<dbReference type="PDB" id="5RSA">
    <property type="method" value="X-ray"/>
    <property type="resolution" value="2.00 A"/>
    <property type="chains" value="A=27-150"/>
</dbReference>
<dbReference type="PDB" id="6ETK">
    <property type="method" value="X-ray"/>
    <property type="resolution" value="0.85 A"/>
    <property type="chains" value="A=27-150"/>
</dbReference>
<dbReference type="PDB" id="6ETL">
    <property type="method" value="X-ray"/>
    <property type="resolution" value="0.85 A"/>
    <property type="chains" value="A=27-150"/>
</dbReference>
<dbReference type="PDB" id="6ETM">
    <property type="method" value="X-ray"/>
    <property type="resolution" value="0.92 A"/>
    <property type="chains" value="A=27-150"/>
</dbReference>
<dbReference type="PDB" id="6ETN">
    <property type="method" value="X-ray"/>
    <property type="resolution" value="0.92 A"/>
    <property type="chains" value="A=27-150"/>
</dbReference>
<dbReference type="PDB" id="6ETO">
    <property type="method" value="X-ray"/>
    <property type="resolution" value="1.02 A"/>
    <property type="chains" value="A=27-150"/>
</dbReference>
<dbReference type="PDB" id="6ETP">
    <property type="method" value="X-ray"/>
    <property type="resolution" value="1.02 A"/>
    <property type="chains" value="A=27-150"/>
</dbReference>
<dbReference type="PDB" id="6ETQ">
    <property type="method" value="X-ray"/>
    <property type="resolution" value="1.08 A"/>
    <property type="chains" value="A=27-150"/>
</dbReference>
<dbReference type="PDB" id="6ETR">
    <property type="method" value="X-ray"/>
    <property type="resolution" value="1.17 A"/>
    <property type="chains" value="A=27-150"/>
</dbReference>
<dbReference type="PDB" id="6F60">
    <property type="method" value="X-ray"/>
    <property type="resolution" value="1.14 A"/>
    <property type="chains" value="A/B=27-150"/>
</dbReference>
<dbReference type="PDB" id="6GOK">
    <property type="method" value="X-ray"/>
    <property type="resolution" value="2.65 A"/>
    <property type="chains" value="A/B=27-150"/>
</dbReference>
<dbReference type="PDB" id="6PVU">
    <property type="method" value="X-ray"/>
    <property type="resolution" value="1.49 A"/>
    <property type="chains" value="A/B=27-150"/>
</dbReference>
<dbReference type="PDB" id="6PVV">
    <property type="method" value="X-ray"/>
    <property type="resolution" value="1.65 A"/>
    <property type="chains" value="A/B=27-150"/>
</dbReference>
<dbReference type="PDB" id="6PVW">
    <property type="method" value="X-ray"/>
    <property type="resolution" value="1.60 A"/>
    <property type="chains" value="A/B=27-150"/>
</dbReference>
<dbReference type="PDB" id="6PVX">
    <property type="method" value="X-ray"/>
    <property type="resolution" value="1.55 A"/>
    <property type="chains" value="A/B=27-150"/>
</dbReference>
<dbReference type="PDB" id="6QE9">
    <property type="method" value="X-ray"/>
    <property type="resolution" value="2.03 A"/>
    <property type="chains" value="A/B=27-150"/>
</dbReference>
<dbReference type="PDB" id="6RAT">
    <property type="method" value="X-ray"/>
    <property type="resolution" value="1.50 A"/>
    <property type="chains" value="A=27-150"/>
</dbReference>
<dbReference type="PDB" id="6RSA">
    <property type="method" value="X-ray"/>
    <property type="resolution" value="2.00 A"/>
    <property type="chains" value="A=27-150"/>
</dbReference>
<dbReference type="PDB" id="6XHC">
    <property type="method" value="X-ray"/>
    <property type="resolution" value="1.60 A"/>
    <property type="chains" value="A/B=27-150"/>
</dbReference>
<dbReference type="PDB" id="6XHD">
    <property type="method" value="X-ray"/>
    <property type="resolution" value="1.51 A"/>
    <property type="chains" value="A/B=27-150"/>
</dbReference>
<dbReference type="PDB" id="6XHE">
    <property type="method" value="X-ray"/>
    <property type="resolution" value="1.88 A"/>
    <property type="chains" value="A/B=27-150"/>
</dbReference>
<dbReference type="PDB" id="6XHF">
    <property type="method" value="X-ray"/>
    <property type="resolution" value="1.45 A"/>
    <property type="chains" value="A/B=27-150"/>
</dbReference>
<dbReference type="PDB" id="6XVX">
    <property type="method" value="X-ray"/>
    <property type="resolution" value="1.40 A"/>
    <property type="chains" value="AAA/BBB=27-150"/>
</dbReference>
<dbReference type="PDB" id="6XW0">
    <property type="method" value="X-ray"/>
    <property type="resolution" value="1.80 A"/>
    <property type="chains" value="AAA/BBB=27-150"/>
</dbReference>
<dbReference type="PDB" id="6YO1">
    <property type="method" value="X-ray"/>
    <property type="resolution" value="1.90 A"/>
    <property type="chains" value="A/B=27-150"/>
</dbReference>
<dbReference type="PDB" id="7P4R">
    <property type="method" value="X-ray"/>
    <property type="resolution" value="0.85 A"/>
    <property type="chains" value="AAA=27-150"/>
</dbReference>
<dbReference type="PDB" id="7P8R">
    <property type="method" value="X-ray"/>
    <property type="resolution" value="1.27 A"/>
    <property type="chains" value="A/B=27-150"/>
</dbReference>
<dbReference type="PDB" id="7PNI">
    <property type="method" value="X-ray"/>
    <property type="resolution" value="2.13 A"/>
    <property type="chains" value="AAA/BBB=27-150"/>
</dbReference>
<dbReference type="PDB" id="7Q75">
    <property type="method" value="X-ray"/>
    <property type="resolution" value="1.64 A"/>
    <property type="chains" value="A=27-150"/>
</dbReference>
<dbReference type="PDB" id="7Q76">
    <property type="method" value="X-ray"/>
    <property type="resolution" value="1.48 A"/>
    <property type="chains" value="A=27-150"/>
</dbReference>
<dbReference type="PDB" id="7Q77">
    <property type="method" value="X-ray"/>
    <property type="resolution" value="1.60 A"/>
    <property type="chains" value="A=27-150"/>
</dbReference>
<dbReference type="PDB" id="7Q78">
    <property type="method" value="X-ray"/>
    <property type="resolution" value="1.52 A"/>
    <property type="chains" value="A=27-150"/>
</dbReference>
<dbReference type="PDB" id="7Q79">
    <property type="method" value="X-ray"/>
    <property type="resolution" value="1.55 A"/>
    <property type="chains" value="A=27-150"/>
</dbReference>
<dbReference type="PDB" id="7Q7A">
    <property type="method" value="X-ray"/>
    <property type="resolution" value="1.56 A"/>
    <property type="chains" value="A=27-150"/>
</dbReference>
<dbReference type="PDB" id="7Q7B">
    <property type="method" value="X-ray"/>
    <property type="resolution" value="1.78 A"/>
    <property type="chains" value="A=27-150"/>
</dbReference>
<dbReference type="PDB" id="7QHR">
    <property type="method" value="X-ray"/>
    <property type="resolution" value="1.40 A"/>
    <property type="chains" value="A/B=27-150"/>
</dbReference>
<dbReference type="PDB" id="7QPW">
    <property type="method" value="X-ray"/>
    <property type="resolution" value="1.15 A"/>
    <property type="chains" value="AAA/BBB=27-150"/>
</dbReference>
<dbReference type="PDB" id="7QPY">
    <property type="method" value="X-ray"/>
    <property type="resolution" value="1.42 A"/>
    <property type="chains" value="A/B=27-150"/>
</dbReference>
<dbReference type="PDB" id="7QPZ">
    <property type="method" value="X-ray"/>
    <property type="resolution" value="1.45 A"/>
    <property type="chains" value="A/B=27-150"/>
</dbReference>
<dbReference type="PDB" id="7QQ0">
    <property type="method" value="X-ray"/>
    <property type="resolution" value="1.32 A"/>
    <property type="chains" value="AAA/BBB=27-150"/>
</dbReference>
<dbReference type="PDB" id="7QWH">
    <property type="method" value="X-ray"/>
    <property type="resolution" value="1.57 A"/>
    <property type="chains" value="AAA/BBB=27-150"/>
</dbReference>
<dbReference type="PDB" id="7R1P">
    <property type="method" value="X-ray"/>
    <property type="resolution" value="1.42 A"/>
    <property type="chains" value="AAA/BBB=27-150"/>
</dbReference>
<dbReference type="PDB" id="7RAT">
    <property type="method" value="X-ray"/>
    <property type="resolution" value="1.50 A"/>
    <property type="chains" value="A=27-150"/>
</dbReference>
<dbReference type="PDB" id="7RSA">
    <property type="method" value="X-ray"/>
    <property type="resolution" value="1.26 A"/>
    <property type="chains" value="A=27-150"/>
</dbReference>
<dbReference type="PDB" id="7Z6D">
    <property type="method" value="X-ray"/>
    <property type="resolution" value="1.45 A"/>
    <property type="chains" value="A/B=27-150"/>
</dbReference>
<dbReference type="PDB" id="7Z6G">
    <property type="method" value="X-ray"/>
    <property type="resolution" value="1.71 A"/>
    <property type="chains" value="A/B=27-150"/>
</dbReference>
<dbReference type="PDB" id="8C3B">
    <property type="method" value="X-ray"/>
    <property type="resolution" value="1.24 A"/>
    <property type="chains" value="AAA/BBB=27-150"/>
</dbReference>
<dbReference type="PDB" id="8FHM">
    <property type="method" value="Other"/>
    <property type="resolution" value="1.79 A"/>
    <property type="chains" value="A/B=27-150"/>
</dbReference>
<dbReference type="PDB" id="8GC9">
    <property type="method" value="X-ray"/>
    <property type="resolution" value="1.85 A"/>
    <property type="chains" value="A/B=27-150"/>
</dbReference>
<dbReference type="PDB" id="8GGG">
    <property type="method" value="X-ray"/>
    <property type="resolution" value="1.86 A"/>
    <property type="chains" value="A/B=27-150"/>
</dbReference>
<dbReference type="PDB" id="8OQC">
    <property type="method" value="X-ray"/>
    <property type="resolution" value="1.50 A"/>
    <property type="chains" value="A=27-150"/>
</dbReference>
<dbReference type="PDB" id="8OQD">
    <property type="method" value="X-ray"/>
    <property type="resolution" value="1.54 A"/>
    <property type="chains" value="A=27-150"/>
</dbReference>
<dbReference type="PDB" id="8OQE">
    <property type="method" value="X-ray"/>
    <property type="resolution" value="1.50 A"/>
    <property type="chains" value="A=27-150"/>
</dbReference>
<dbReference type="PDB" id="8OQF">
    <property type="method" value="X-ray"/>
    <property type="resolution" value="1.50 A"/>
    <property type="chains" value="A=27-150"/>
</dbReference>
<dbReference type="PDB" id="8OQG">
    <property type="method" value="X-ray"/>
    <property type="resolution" value="1.60 A"/>
    <property type="chains" value="A=27-150"/>
</dbReference>
<dbReference type="PDB" id="8PX0">
    <property type="method" value="X-ray"/>
    <property type="resolution" value="1.80 A"/>
    <property type="chains" value="A/B=27-150"/>
</dbReference>
<dbReference type="PDB" id="8R5V">
    <property type="method" value="X-ray"/>
    <property type="resolution" value="1.80 A"/>
    <property type="chains" value="A/B=1-150"/>
</dbReference>
<dbReference type="PDB" id="8RAT">
    <property type="method" value="X-ray"/>
    <property type="resolution" value="1.50 A"/>
    <property type="chains" value="A=27-150"/>
</dbReference>
<dbReference type="PDB" id="8RSA">
    <property type="method" value="X-ray"/>
    <property type="resolution" value="1.80 A"/>
    <property type="chains" value="A/B=27-150"/>
</dbReference>
<dbReference type="PDB" id="8S96">
    <property type="method" value="X-ray"/>
    <property type="resolution" value="1.68 A"/>
    <property type="chains" value="A/B=27-150"/>
</dbReference>
<dbReference type="PDB" id="8UAX">
    <property type="method" value="X-ray"/>
    <property type="resolution" value="1.90 A"/>
    <property type="chains" value="A/B=27-150"/>
</dbReference>
<dbReference type="PDB" id="8UAY">
    <property type="method" value="X-ray"/>
    <property type="resolution" value="1.80 A"/>
    <property type="chains" value="A/B=27-150"/>
</dbReference>
<dbReference type="PDB" id="8UAZ">
    <property type="method" value="X-ray"/>
    <property type="resolution" value="1.76 A"/>
    <property type="chains" value="A/B=27-150"/>
</dbReference>
<dbReference type="PDB" id="8UB0">
    <property type="method" value="X-ray"/>
    <property type="resolution" value="2.00 A"/>
    <property type="chains" value="A/B=27-150"/>
</dbReference>
<dbReference type="PDB" id="8UB1">
    <property type="method" value="X-ray"/>
    <property type="resolution" value="1.53 A"/>
    <property type="chains" value="A/B=27-150"/>
</dbReference>
<dbReference type="PDB" id="8UB2">
    <property type="method" value="X-ray"/>
    <property type="resolution" value="1.60 A"/>
    <property type="chains" value="A/B=27-150"/>
</dbReference>
<dbReference type="PDB" id="9FYW">
    <property type="method" value="X-ray"/>
    <property type="resolution" value="1.40 A"/>
    <property type="chains" value="A/B=1-150"/>
</dbReference>
<dbReference type="PDB" id="9GYS">
    <property type="method" value="X-ray"/>
    <property type="resolution" value="1.74 A"/>
    <property type="chains" value="A/B=27-150"/>
</dbReference>
<dbReference type="PDB" id="9JWD">
    <property type="method" value="X-ray"/>
    <property type="resolution" value="2.22 A"/>
    <property type="chains" value="A=27-150"/>
</dbReference>
<dbReference type="PDB" id="9JWH">
    <property type="method" value="X-ray"/>
    <property type="resolution" value="1.85 A"/>
    <property type="chains" value="A=27-150"/>
</dbReference>
<dbReference type="PDB" id="9RAT">
    <property type="method" value="X-ray"/>
    <property type="resolution" value="1.50 A"/>
    <property type="chains" value="A=27-150"/>
</dbReference>
<dbReference type="PDB" id="9RSA">
    <property type="method" value="X-ray"/>
    <property type="resolution" value="1.80 A"/>
    <property type="chains" value="A/B=27-150"/>
</dbReference>
<dbReference type="PDBsum" id="1A2W"/>
<dbReference type="PDBsum" id="1A5P"/>
<dbReference type="PDBsum" id="1A5Q"/>
<dbReference type="PDBsum" id="1AFK"/>
<dbReference type="PDBsum" id="1AFL"/>
<dbReference type="PDBsum" id="1AFU"/>
<dbReference type="PDBsum" id="1AQP"/>
<dbReference type="PDBsum" id="1B6V"/>
<dbReference type="PDBsum" id="1BEL"/>
<dbReference type="PDBsum" id="1BZQ"/>
<dbReference type="PDBsum" id="1C0B"/>
<dbReference type="PDBsum" id="1C0C"/>
<dbReference type="PDBsum" id="1C8W"/>
<dbReference type="PDBsum" id="1C9V"/>
<dbReference type="PDBsum" id="1C9X"/>
<dbReference type="PDBsum" id="1CJQ"/>
<dbReference type="PDBsum" id="1CJR"/>
<dbReference type="PDBsum" id="1D5D"/>
<dbReference type="PDBsum" id="1D5E"/>
<dbReference type="PDBsum" id="1D5H"/>
<dbReference type="PDBsum" id="1DFJ"/>
<dbReference type="PDBsum" id="1DY5"/>
<dbReference type="PDBsum" id="1EIC"/>
<dbReference type="PDBsum" id="1EID"/>
<dbReference type="PDBsum" id="1EIE"/>
<dbReference type="PDBsum" id="1EOS"/>
<dbReference type="PDBsum" id="1EOW"/>
<dbReference type="PDBsum" id="1F0V"/>
<dbReference type="PDBsum" id="1FEV"/>
<dbReference type="PDBsum" id="1FS3"/>
<dbReference type="PDBsum" id="1GV7"/>
<dbReference type="PDBsum" id="1IZP"/>
<dbReference type="PDBsum" id="1IZQ"/>
<dbReference type="PDBsum" id="1IZR"/>
<dbReference type="PDBsum" id="1J7Z"/>
<dbReference type="PDBsum" id="1J80"/>
<dbReference type="PDBsum" id="1J81"/>
<dbReference type="PDBsum" id="1J82"/>
<dbReference type="PDBsum" id="1JN4"/>
<dbReference type="PDBsum" id="1JS0"/>
<dbReference type="PDBsum" id="1JVT"/>
<dbReference type="PDBsum" id="1JVU"/>
<dbReference type="PDBsum" id="1JVV"/>
<dbReference type="PDBsum" id="1KF2"/>
<dbReference type="PDBsum" id="1KF3"/>
<dbReference type="PDBsum" id="1KF4"/>
<dbReference type="PDBsum" id="1KF5"/>
<dbReference type="PDBsum" id="1KF7"/>
<dbReference type="PDBsum" id="1KF8"/>
<dbReference type="PDBsum" id="1KH8"/>
<dbReference type="PDBsum" id="1LSQ"/>
<dbReference type="PDBsum" id="1O0F"/>
<dbReference type="PDBsum" id="1O0H"/>
<dbReference type="PDBsum" id="1O0M"/>
<dbReference type="PDBsum" id="1O0N"/>
<dbReference type="PDBsum" id="1O0O"/>
<dbReference type="PDBsum" id="1QHC"/>
<dbReference type="PDBsum" id="1RAR"/>
<dbReference type="PDBsum" id="1RAS"/>
<dbReference type="PDBsum" id="1RAT"/>
<dbReference type="PDBsum" id="1RBB"/>
<dbReference type="PDBsum" id="1RBC"/>
<dbReference type="PDBsum" id="1RBD"/>
<dbReference type="PDBsum" id="1RBE"/>
<dbReference type="PDBsum" id="1RBF"/>
<dbReference type="PDBsum" id="1RBG"/>
<dbReference type="PDBsum" id="1RBH"/>
<dbReference type="PDBsum" id="1RBI"/>
<dbReference type="PDBsum" id="1RBJ"/>
<dbReference type="PDBsum" id="1RBN"/>
<dbReference type="PDBsum" id="1RBW"/>
<dbReference type="PDBsum" id="1RBX"/>
<dbReference type="PDBsum" id="1RCA"/>
<dbReference type="PDBsum" id="1RCN"/>
<dbReference type="PDBsum" id="1RHA"/>
<dbReference type="PDBsum" id="1RHB"/>
<dbReference type="PDBsum" id="1RNC"/>
<dbReference type="PDBsum" id="1RND"/>
<dbReference type="PDBsum" id="1RNM"/>
<dbReference type="PDBsum" id="1RNN"/>
<dbReference type="PDBsum" id="1RNO"/>
<dbReference type="PDBsum" id="1RNQ"/>
<dbReference type="PDBsum" id="1RNU"/>
<dbReference type="PDBsum" id="1RNV"/>
<dbReference type="PDBsum" id="1RNW"/>
<dbReference type="PDBsum" id="1RNX"/>
<dbReference type="PDBsum" id="1RNY"/>
<dbReference type="PDBsum" id="1RNZ"/>
<dbReference type="PDBsum" id="1ROB"/>
<dbReference type="PDBsum" id="1RPF"/>
<dbReference type="PDBsum" id="1RPG"/>
<dbReference type="PDBsum" id="1RPH"/>
<dbReference type="PDBsum" id="1RSM"/>
<dbReference type="PDBsum" id="1RTA"/>
<dbReference type="PDBsum" id="1RTB"/>
<dbReference type="PDBsum" id="1RUV"/>
<dbReference type="PDBsum" id="1SRN"/>
<dbReference type="PDBsum" id="1SSA"/>
<dbReference type="PDBsum" id="1SSB"/>
<dbReference type="PDBsum" id="1SSC"/>
<dbReference type="PDBsum" id="1U1B"/>
<dbReference type="PDBsum" id="1UN5"/>
<dbReference type="PDBsum" id="1W4O"/>
<dbReference type="PDBsum" id="1W4P"/>
<dbReference type="PDBsum" id="1W4Q"/>
<dbReference type="PDBsum" id="1WBU"/>
<dbReference type="PDBsum" id="1XPS"/>
<dbReference type="PDBsum" id="1XPT"/>
<dbReference type="PDBsum" id="1YMN"/>
<dbReference type="PDBsum" id="1YMR"/>
<dbReference type="PDBsum" id="1YMW"/>
<dbReference type="PDBsum" id="1Z3L"/>
<dbReference type="PDBsum" id="1Z3M"/>
<dbReference type="PDBsum" id="1Z3P"/>
<dbReference type="PDBsum" id="1Z6D"/>
<dbReference type="PDBsum" id="1Z6S"/>
<dbReference type="PDBsum" id="2AAS"/>
<dbReference type="PDBsum" id="2APQ"/>
<dbReference type="PDBsum" id="2BLP"/>
<dbReference type="PDBsum" id="2BLZ"/>
<dbReference type="PDBsum" id="2E33"/>
<dbReference type="PDBsum" id="2E3W"/>
<dbReference type="PDBsum" id="2G4W"/>
<dbReference type="PDBsum" id="2G4X"/>
<dbReference type="PDBsum" id="2G8Q"/>
<dbReference type="PDBsum" id="2G8R"/>
<dbReference type="PDBsum" id="2NUI"/>
<dbReference type="PDBsum" id="2OP2"/>
<dbReference type="PDBsum" id="2OQF"/>
<dbReference type="PDBsum" id="2P42"/>
<dbReference type="PDBsum" id="2P43"/>
<dbReference type="PDBsum" id="2P44"/>
<dbReference type="PDBsum" id="2P45"/>
<dbReference type="PDBsum" id="2P46"/>
<dbReference type="PDBsum" id="2P47"/>
<dbReference type="PDBsum" id="2P48"/>
<dbReference type="PDBsum" id="2P49"/>
<dbReference type="PDBsum" id="2P4A"/>
<dbReference type="PDBsum" id="2QCA"/>
<dbReference type="PDBsum" id="2RAT"/>
<dbReference type="PDBsum" id="2RLN"/>
<dbReference type="PDBsum" id="2RNS"/>
<dbReference type="PDBsum" id="2W5G"/>
<dbReference type="PDBsum" id="2W5I"/>
<dbReference type="PDBsum" id="2W5K"/>
<dbReference type="PDBsum" id="2W5L"/>
<dbReference type="PDBsum" id="2W5M"/>
<dbReference type="PDBsum" id="2XOG"/>
<dbReference type="PDBsum" id="2XOI"/>
<dbReference type="PDBsum" id="3A1R"/>
<dbReference type="PDBsum" id="3D6O"/>
<dbReference type="PDBsum" id="3D6P"/>
<dbReference type="PDBsum" id="3D6Q"/>
<dbReference type="PDBsum" id="3D7B"/>
<dbReference type="PDBsum" id="3D8Y"/>
<dbReference type="PDBsum" id="3D8Z"/>
<dbReference type="PDBsum" id="3DH5"/>
<dbReference type="PDBsum" id="3DH6"/>
<dbReference type="PDBsum" id="3DI7"/>
<dbReference type="PDBsum" id="3DI8"/>
<dbReference type="PDBsum" id="3DI9"/>
<dbReference type="PDBsum" id="3DIB"/>
<dbReference type="PDBsum" id="3DIC"/>
<dbReference type="PDBsum" id="3DXG"/>
<dbReference type="PDBsum" id="3DXH"/>
<dbReference type="PDBsum" id="3EUX"/>
<dbReference type="PDBsum" id="3EUY"/>
<dbReference type="PDBsum" id="3EUZ"/>
<dbReference type="PDBsum" id="3EV0"/>
<dbReference type="PDBsum" id="3EV1"/>
<dbReference type="PDBsum" id="3EV2"/>
<dbReference type="PDBsum" id="3EV3"/>
<dbReference type="PDBsum" id="3EV4"/>
<dbReference type="PDBsum" id="3EV5"/>
<dbReference type="PDBsum" id="3EV6"/>
<dbReference type="PDBsum" id="3FKZ"/>
<dbReference type="PDBsum" id="3FL0"/>
<dbReference type="PDBsum" id="3FL1"/>
<dbReference type="PDBsum" id="3FL3"/>
<dbReference type="PDBsum" id="3I67"/>
<dbReference type="PDBsum" id="3I6F"/>
<dbReference type="PDBsum" id="3I6H"/>
<dbReference type="PDBsum" id="3I6J"/>
<dbReference type="PDBsum" id="3I7W"/>
<dbReference type="PDBsum" id="3I7X"/>
<dbReference type="PDBsum" id="3I7Y"/>
<dbReference type="PDBsum" id="3JW1"/>
<dbReference type="PDBsum" id="3LXO"/>
<dbReference type="PDBsum" id="3MWQ"/>
<dbReference type="PDBsum" id="3MWR"/>
<dbReference type="PDBsum" id="3MX8"/>
<dbReference type="PDBsum" id="3MZQ"/>
<dbReference type="PDBsum" id="3MZR"/>
<dbReference type="PDBsum" id="3OQY"/>
<dbReference type="PDBsum" id="3OQZ"/>
<dbReference type="PDBsum" id="3OR0"/>
<dbReference type="PDBsum" id="3QL1"/>
<dbReference type="PDBsum" id="3QL2"/>
<dbReference type="PDBsum" id="3QSK"/>
<dbReference type="PDBsum" id="3RAT"/>
<dbReference type="PDBsum" id="3RH1"/>
<dbReference type="PDBsum" id="3RID"/>
<dbReference type="PDBsum" id="3RN3"/>
<dbReference type="PDBsum" id="3RSD"/>
<dbReference type="PDBsum" id="3RSK"/>
<dbReference type="PDBsum" id="3RSP"/>
<dbReference type="PDBsum" id="3SRN"/>
<dbReference type="PDBsum" id="4AO1"/>
<dbReference type="PDBsum" id="4G8V"/>
<dbReference type="PDBsum" id="4G8Y"/>
<dbReference type="PDBsum" id="4G90"/>
<dbReference type="PDBsum" id="4J5Z"/>
<dbReference type="PDBsum" id="4J60"/>
<dbReference type="PDBsum" id="4J61"/>
<dbReference type="PDBsum" id="4J62"/>
<dbReference type="PDBsum" id="4J63"/>
<dbReference type="PDBsum" id="4J64"/>
<dbReference type="PDBsum" id="4J65"/>
<dbReference type="PDBsum" id="4J66"/>
<dbReference type="PDBsum" id="4J67"/>
<dbReference type="PDBsum" id="4J68"/>
<dbReference type="PDBsum" id="4J69"/>
<dbReference type="PDBsum" id="4J6A"/>
<dbReference type="PDBsum" id="4K7L"/>
<dbReference type="PDBsum" id="4K7M"/>
<dbReference type="PDBsum" id="4L55"/>
<dbReference type="PDBsum" id="4MXF"/>
<dbReference type="PDBsum" id="4O36"/>
<dbReference type="PDBsum" id="4O37"/>
<dbReference type="PDBsum" id="4OKF"/>
<dbReference type="PDBsum" id="4OOH"/>
<dbReference type="PDBsum" id="4OT4"/>
<dbReference type="PDBsum" id="4PEQ"/>
<dbReference type="PDBsum" id="4POU"/>
<dbReference type="PDBsum" id="4QH3"/>
<dbReference type="PDBsum" id="4RAT"/>
<dbReference type="PDBsum" id="4RSD"/>
<dbReference type="PDBsum" id="4RSK"/>
<dbReference type="PDBsum" id="4RTE"/>
<dbReference type="PDBsum" id="4S0Q"/>
<dbReference type="PDBsum" id="4S18"/>
<dbReference type="PDBsum" id="4SRN"/>
<dbReference type="PDBsum" id="4WYN"/>
<dbReference type="PDBsum" id="4WYP"/>
<dbReference type="PDBsum" id="4WYZ"/>
<dbReference type="PDBsum" id="4YGW"/>
<dbReference type="PDBsum" id="4ZZ4"/>
<dbReference type="PDBsum" id="5D6U"/>
<dbReference type="PDBsum" id="5D97"/>
<dbReference type="PDBsum" id="5E5E"/>
<dbReference type="PDBsum" id="5E5F"/>
<dbReference type="PDBsum" id="5ET4"/>
<dbReference type="PDBsum" id="5JLG"/>
<dbReference type="PDBsum" id="5JMG"/>
<dbReference type="PDBsum" id="5JML"/>
<dbReference type="PDBsum" id="5NA9"/>
<dbReference type="PDBsum" id="5NJ7"/>
<dbReference type="PDBsum" id="5OBC"/>
<dbReference type="PDBsum" id="5OBD"/>
<dbReference type="PDBsum" id="5OBE"/>
<dbReference type="PDBsum" id="5OGH"/>
<dbReference type="PDBsum" id="5OLD"/>
<dbReference type="PDBsum" id="5RAT"/>
<dbReference type="PDBsum" id="5RSA"/>
<dbReference type="PDBsum" id="6ETK"/>
<dbReference type="PDBsum" id="6ETL"/>
<dbReference type="PDBsum" id="6ETM"/>
<dbReference type="PDBsum" id="6ETN"/>
<dbReference type="PDBsum" id="6ETO"/>
<dbReference type="PDBsum" id="6ETP"/>
<dbReference type="PDBsum" id="6ETQ"/>
<dbReference type="PDBsum" id="6ETR"/>
<dbReference type="PDBsum" id="6F60"/>
<dbReference type="PDBsum" id="6GOK"/>
<dbReference type="PDBsum" id="6PVU"/>
<dbReference type="PDBsum" id="6PVV"/>
<dbReference type="PDBsum" id="6PVW"/>
<dbReference type="PDBsum" id="6PVX"/>
<dbReference type="PDBsum" id="6QE9"/>
<dbReference type="PDBsum" id="6RAT"/>
<dbReference type="PDBsum" id="6RSA"/>
<dbReference type="PDBsum" id="6XHC"/>
<dbReference type="PDBsum" id="6XHD"/>
<dbReference type="PDBsum" id="6XHE"/>
<dbReference type="PDBsum" id="6XHF"/>
<dbReference type="PDBsum" id="6XVX"/>
<dbReference type="PDBsum" id="6XW0"/>
<dbReference type="PDBsum" id="6YO1"/>
<dbReference type="PDBsum" id="7P4R"/>
<dbReference type="PDBsum" id="7P8R"/>
<dbReference type="PDBsum" id="7PNI"/>
<dbReference type="PDBsum" id="7Q75"/>
<dbReference type="PDBsum" id="7Q76"/>
<dbReference type="PDBsum" id="7Q77"/>
<dbReference type="PDBsum" id="7Q78"/>
<dbReference type="PDBsum" id="7Q79"/>
<dbReference type="PDBsum" id="7Q7A"/>
<dbReference type="PDBsum" id="7Q7B"/>
<dbReference type="PDBsum" id="7QHR"/>
<dbReference type="PDBsum" id="7QPW"/>
<dbReference type="PDBsum" id="7QPY"/>
<dbReference type="PDBsum" id="7QPZ"/>
<dbReference type="PDBsum" id="7QQ0"/>
<dbReference type="PDBsum" id="7QWH"/>
<dbReference type="PDBsum" id="7R1P"/>
<dbReference type="PDBsum" id="7RAT"/>
<dbReference type="PDBsum" id="7RSA"/>
<dbReference type="PDBsum" id="7Z6D"/>
<dbReference type="PDBsum" id="7Z6G"/>
<dbReference type="PDBsum" id="8C3B"/>
<dbReference type="PDBsum" id="8FHM"/>
<dbReference type="PDBsum" id="8GC9"/>
<dbReference type="PDBsum" id="8GGG"/>
<dbReference type="PDBsum" id="8OQC"/>
<dbReference type="PDBsum" id="8OQD"/>
<dbReference type="PDBsum" id="8OQE"/>
<dbReference type="PDBsum" id="8OQF"/>
<dbReference type="PDBsum" id="8OQG"/>
<dbReference type="PDBsum" id="8PX0"/>
<dbReference type="PDBsum" id="8R5V"/>
<dbReference type="PDBsum" id="8RAT"/>
<dbReference type="PDBsum" id="8RSA"/>
<dbReference type="PDBsum" id="8S96"/>
<dbReference type="PDBsum" id="8UAX"/>
<dbReference type="PDBsum" id="8UAY"/>
<dbReference type="PDBsum" id="8UAZ"/>
<dbReference type="PDBsum" id="8UB0"/>
<dbReference type="PDBsum" id="8UB1"/>
<dbReference type="PDBsum" id="8UB2"/>
<dbReference type="PDBsum" id="9FYW"/>
<dbReference type="PDBsum" id="9GYS"/>
<dbReference type="PDBsum" id="9JWD"/>
<dbReference type="PDBsum" id="9JWH"/>
<dbReference type="PDBsum" id="9RAT"/>
<dbReference type="PDBsum" id="9RSA"/>
<dbReference type="BMRB" id="P61823"/>
<dbReference type="PCDDB" id="P61823"/>
<dbReference type="SASBDB" id="P61823"/>
<dbReference type="SMR" id="P61823"/>
<dbReference type="BioGRID" id="159601">
    <property type="interactions" value="1"/>
</dbReference>
<dbReference type="DIP" id="DIP-36384N"/>
<dbReference type="FunCoup" id="P61823">
    <property type="interactions" value="20"/>
</dbReference>
<dbReference type="IntAct" id="P61823">
    <property type="interactions" value="7"/>
</dbReference>
<dbReference type="MINT" id="P61823"/>
<dbReference type="STRING" id="9913.ENSBTAP00000011586"/>
<dbReference type="BindingDB" id="P61823"/>
<dbReference type="ChEMBL" id="CHEMBL6091"/>
<dbReference type="DrugCentral" id="P61823"/>
<dbReference type="CarbonylDB" id="P61823"/>
<dbReference type="GlyConnect" id="529">
    <property type="glycosylation" value="26 N-Linked glycans (1 site)"/>
</dbReference>
<dbReference type="GlyCosmos" id="P61823">
    <property type="glycosylation" value="5 sites, 22 glycans"/>
</dbReference>
<dbReference type="GlyGen" id="P61823">
    <property type="glycosylation" value="2 sites, 22 N-linked glycans (2 sites)"/>
</dbReference>
<dbReference type="PaxDb" id="9913-ENSBTAP00000011586"/>
<dbReference type="PeptideAtlas" id="P61823"/>
<dbReference type="ABCD" id="P61823">
    <property type="antibodies" value="5 sequenced antibodies"/>
</dbReference>
<dbReference type="Ensembl" id="ENSBTAT00000011586.6">
    <property type="protein sequence ID" value="ENSBTAP00000011586.4"/>
    <property type="gene ID" value="ENSBTAG00000008793.6"/>
</dbReference>
<dbReference type="GeneID" id="282340"/>
<dbReference type="KEGG" id="bta:282340"/>
<dbReference type="VEuPathDB" id="HostDB:ENSBTAG00000008793"/>
<dbReference type="eggNOG" id="ENOG502SQ4K">
    <property type="taxonomic scope" value="Eukaryota"/>
</dbReference>
<dbReference type="GeneTree" id="ENSGT00940000160869"/>
<dbReference type="HOGENOM" id="CLU_117006_0_0_1"/>
<dbReference type="InParanoid" id="P61823"/>
<dbReference type="OMA" id="LMGHRYC"/>
<dbReference type="OrthoDB" id="8573660at2759"/>
<dbReference type="TreeFam" id="TF333393"/>
<dbReference type="BRENDA" id="4.6.1.18">
    <property type="organism ID" value="908"/>
</dbReference>
<dbReference type="SABIO-RK" id="P61823"/>
<dbReference type="EvolutionaryTrace" id="P61823"/>
<dbReference type="PRO" id="PR:P61823"/>
<dbReference type="Proteomes" id="UP000009136">
    <property type="component" value="Chromosome 10"/>
</dbReference>
<dbReference type="Bgee" id="ENSBTAG00000008793">
    <property type="expression patterns" value="Expressed in corpus epididymis and 92 other cell types or tissues"/>
</dbReference>
<dbReference type="GO" id="GO:0005576">
    <property type="term" value="C:extracellular region"/>
    <property type="evidence" value="ECO:0007669"/>
    <property type="project" value="UniProtKB-SubCell"/>
</dbReference>
<dbReference type="GO" id="GO:0016829">
    <property type="term" value="F:lyase activity"/>
    <property type="evidence" value="ECO:0007669"/>
    <property type="project" value="UniProtKB-KW"/>
</dbReference>
<dbReference type="GO" id="GO:0003676">
    <property type="term" value="F:nucleic acid binding"/>
    <property type="evidence" value="ECO:0007669"/>
    <property type="project" value="InterPro"/>
</dbReference>
<dbReference type="GO" id="GO:0004522">
    <property type="term" value="F:ribonuclease A activity"/>
    <property type="evidence" value="ECO:0007669"/>
    <property type="project" value="UniProtKB-EC"/>
</dbReference>
<dbReference type="GO" id="GO:0004540">
    <property type="term" value="F:RNA nuclease activity"/>
    <property type="evidence" value="ECO:0000318"/>
    <property type="project" value="GO_Central"/>
</dbReference>
<dbReference type="GO" id="GO:0050830">
    <property type="term" value="P:defense response to Gram-positive bacterium"/>
    <property type="evidence" value="ECO:0000318"/>
    <property type="project" value="GO_Central"/>
</dbReference>
<dbReference type="CDD" id="cd06265">
    <property type="entry name" value="RNase_A_canonical"/>
    <property type="match status" value="1"/>
</dbReference>
<dbReference type="FunFam" id="3.10.130.10:FF:000001">
    <property type="entry name" value="Ribonuclease pancreatic"/>
    <property type="match status" value="1"/>
</dbReference>
<dbReference type="Gene3D" id="3.10.130.10">
    <property type="entry name" value="Ribonuclease A-like domain"/>
    <property type="match status" value="1"/>
</dbReference>
<dbReference type="InterPro" id="IPR001427">
    <property type="entry name" value="RNaseA"/>
</dbReference>
<dbReference type="InterPro" id="IPR036816">
    <property type="entry name" value="RNaseA-like_dom_sf"/>
</dbReference>
<dbReference type="InterPro" id="IPR023411">
    <property type="entry name" value="RNaseA_AS"/>
</dbReference>
<dbReference type="InterPro" id="IPR023412">
    <property type="entry name" value="RNaseA_domain"/>
</dbReference>
<dbReference type="PANTHER" id="PTHR11437">
    <property type="entry name" value="RIBONUCLEASE"/>
    <property type="match status" value="1"/>
</dbReference>
<dbReference type="PANTHER" id="PTHR11437:SF24">
    <property type="entry name" value="RIBONUCLEASE PANCREATIC"/>
    <property type="match status" value="1"/>
</dbReference>
<dbReference type="Pfam" id="PF00074">
    <property type="entry name" value="RnaseA"/>
    <property type="match status" value="1"/>
</dbReference>
<dbReference type="PRINTS" id="PR00794">
    <property type="entry name" value="RIBONUCLEASE"/>
</dbReference>
<dbReference type="SMART" id="SM00092">
    <property type="entry name" value="RNAse_Pc"/>
    <property type="match status" value="1"/>
</dbReference>
<dbReference type="SUPFAM" id="SSF54076">
    <property type="entry name" value="RNase A-like"/>
    <property type="match status" value="1"/>
</dbReference>
<dbReference type="PROSITE" id="PS00127">
    <property type="entry name" value="RNASE_PANCREATIC"/>
    <property type="match status" value="1"/>
</dbReference>